<comment type="function">
    <text evidence="4 5 11 12 13">Catalyzes the oxidative deamination of primary and some secondary amines such as neurotransmitters, and exogenous amines including the tertiary amine, neurotoxin 1-methyl-4-phenyl-1,2,3,6-tetrahydropyridine (MPTP), with concomitant reduction of oxygen to hydrogen peroxide and participates in the metabolism of neuroactive and vasoactive amines in the central nervous system and peripheral tissues (PubMed:11049757, PubMed:11134050, PubMed:20493079, PubMed:8316221, PubMed:8665924). Preferentially degrades benzylamine and phenylethylamine (PubMed:11049757, PubMed:11134050, PubMed:20493079, PubMed:8316221, PubMed:8665924).</text>
</comment>
<comment type="catalytic activity">
    <reaction evidence="11">
        <text>a secondary aliphatic amine + O2 + H2O = a primary amine + an aldehyde + H2O2</text>
        <dbReference type="Rhea" id="RHEA:26414"/>
        <dbReference type="ChEBI" id="CHEBI:15377"/>
        <dbReference type="ChEBI" id="CHEBI:15379"/>
        <dbReference type="ChEBI" id="CHEBI:16240"/>
        <dbReference type="ChEBI" id="CHEBI:17478"/>
        <dbReference type="ChEBI" id="CHEBI:58855"/>
        <dbReference type="ChEBI" id="CHEBI:65296"/>
        <dbReference type="EC" id="1.4.3.4"/>
    </reaction>
</comment>
<comment type="catalytic activity">
    <reaction evidence="11">
        <text>(R)-adrenaline + O2 + H2O = (R)-3,4-dihydroxymandelaldehyde + methylamine + H2O2</text>
        <dbReference type="Rhea" id="RHEA:51168"/>
        <dbReference type="ChEBI" id="CHEBI:15377"/>
        <dbReference type="ChEBI" id="CHEBI:15379"/>
        <dbReference type="ChEBI" id="CHEBI:16240"/>
        <dbReference type="ChEBI" id="CHEBI:59338"/>
        <dbReference type="ChEBI" id="CHEBI:71406"/>
        <dbReference type="ChEBI" id="CHEBI:180943"/>
    </reaction>
</comment>
<comment type="catalytic activity">
    <reaction evidence="4 5 11 12 13">
        <text>a primary methyl amine + O2 + H2O = an aldehyde + H2O2 + NH4(+)</text>
        <dbReference type="Rhea" id="RHEA:16153"/>
        <dbReference type="ChEBI" id="CHEBI:15377"/>
        <dbReference type="ChEBI" id="CHEBI:15379"/>
        <dbReference type="ChEBI" id="CHEBI:16240"/>
        <dbReference type="ChEBI" id="CHEBI:17478"/>
        <dbReference type="ChEBI" id="CHEBI:28938"/>
        <dbReference type="ChEBI" id="CHEBI:228804"/>
        <dbReference type="EC" id="1.4.3.21"/>
    </reaction>
    <physiologicalReaction direction="left-to-right" evidence="16">
        <dbReference type="Rhea" id="RHEA:16154"/>
    </physiologicalReaction>
</comment>
<comment type="catalytic activity">
    <reaction evidence="4">
        <text>benzylamine + O2 + H2O = benzaldehyde + H2O2 + NH4(+)</text>
        <dbReference type="Rhea" id="RHEA:59424"/>
        <dbReference type="ChEBI" id="CHEBI:15377"/>
        <dbReference type="ChEBI" id="CHEBI:15379"/>
        <dbReference type="ChEBI" id="CHEBI:16240"/>
        <dbReference type="ChEBI" id="CHEBI:17169"/>
        <dbReference type="ChEBI" id="CHEBI:28938"/>
        <dbReference type="ChEBI" id="CHEBI:225238"/>
    </reaction>
    <physiologicalReaction direction="left-to-right" evidence="16">
        <dbReference type="Rhea" id="RHEA:59425"/>
    </physiologicalReaction>
</comment>
<comment type="catalytic activity">
    <reaction evidence="11">
        <text>dopamine + O2 + H2O = 3,4-dihydroxyphenylacetaldehyde + H2O2 + NH4(+)</text>
        <dbReference type="Rhea" id="RHEA:27946"/>
        <dbReference type="ChEBI" id="CHEBI:15377"/>
        <dbReference type="ChEBI" id="CHEBI:15379"/>
        <dbReference type="ChEBI" id="CHEBI:16240"/>
        <dbReference type="ChEBI" id="CHEBI:27978"/>
        <dbReference type="ChEBI" id="CHEBI:28938"/>
        <dbReference type="ChEBI" id="CHEBI:59905"/>
    </reaction>
</comment>
<comment type="catalytic activity">
    <reaction evidence="11">
        <text>tyramine + O2 + H2O = (4-hydroxyphenyl)acetaldehyde + H2O2 + NH4(+)</text>
        <dbReference type="Rhea" id="RHEA:30591"/>
        <dbReference type="ChEBI" id="CHEBI:15377"/>
        <dbReference type="ChEBI" id="CHEBI:15379"/>
        <dbReference type="ChEBI" id="CHEBI:15621"/>
        <dbReference type="ChEBI" id="CHEBI:16240"/>
        <dbReference type="ChEBI" id="CHEBI:28938"/>
        <dbReference type="ChEBI" id="CHEBI:327995"/>
    </reaction>
</comment>
<comment type="catalytic activity">
    <reaction evidence="11">
        <text>(R)-noradrenaline + O2 + H2O = (R)-3,4-dihydroxymandelaldehyde + H2O2 + NH4(+)</text>
        <dbReference type="Rhea" id="RHEA:69076"/>
        <dbReference type="ChEBI" id="CHEBI:15377"/>
        <dbReference type="ChEBI" id="CHEBI:15379"/>
        <dbReference type="ChEBI" id="CHEBI:16240"/>
        <dbReference type="ChEBI" id="CHEBI:28938"/>
        <dbReference type="ChEBI" id="CHEBI:72587"/>
        <dbReference type="ChEBI" id="CHEBI:180943"/>
    </reaction>
</comment>
<comment type="catalytic activity">
    <reaction evidence="5 11 12 13">
        <text>2-phenylethylamine + O2 + H2O = 2-phenylacetaldehyde + H2O2 + NH4(+)</text>
        <dbReference type="Rhea" id="RHEA:25265"/>
        <dbReference type="ChEBI" id="CHEBI:15377"/>
        <dbReference type="ChEBI" id="CHEBI:15379"/>
        <dbReference type="ChEBI" id="CHEBI:16240"/>
        <dbReference type="ChEBI" id="CHEBI:16424"/>
        <dbReference type="ChEBI" id="CHEBI:28938"/>
        <dbReference type="ChEBI" id="CHEBI:225237"/>
    </reaction>
</comment>
<comment type="catalytic activity">
    <reaction evidence="2">
        <text>N-acetylputrescine + O2 + H2O = 4-acetamidobutanal + H2O2 + NH4(+)</text>
        <dbReference type="Rhea" id="RHEA:70283"/>
        <dbReference type="ChEBI" id="CHEBI:7386"/>
        <dbReference type="ChEBI" id="CHEBI:15377"/>
        <dbReference type="ChEBI" id="CHEBI:15379"/>
        <dbReference type="ChEBI" id="CHEBI:16240"/>
        <dbReference type="ChEBI" id="CHEBI:28938"/>
        <dbReference type="ChEBI" id="CHEBI:58263"/>
    </reaction>
    <physiologicalReaction direction="left-to-right" evidence="2">
        <dbReference type="Rhea" id="RHEA:70284"/>
    </physiologicalReaction>
</comment>
<comment type="cofactor">
    <cofactor evidence="6 7 8 9 10">
        <name>FAD</name>
        <dbReference type="ChEBI" id="CHEBI:57692"/>
    </cofactor>
</comment>
<comment type="activity regulation">
    <text evidence="5 11">Inhibited by deprenyl.</text>
</comment>
<comment type="biophysicochemical properties">
    <kinetics>
        <KM evidence="5">1.9 uM for 2-phenylethylamine</KM>
        <KM evidence="12">1.92 uM for 2-phenylethylamine</KM>
        <KM evidence="13">2.45 uM for 2-phenylethylamine</KM>
        <KM evidence="4">0.5 mM for 2-benzylamine</KM>
        <KM evidence="4">0.33 mM for dioxygen</KM>
        <KM evidence="11">226 uM for (R)-adrenaline</KM>
        <KM evidence="11">229 uM for dopamine</KM>
        <KM evidence="11">1093 uM for serotonin</KM>
        <KM evidence="11">238 uM for (R)-noradrenaline</KM>
        <KM evidence="11">4 uM for 2-phenylethylamine</KM>
        <KM evidence="11">107 uM for tyramine</KM>
        <Vmax evidence="11">465.0 pmol/min/mg enzyme toward (R)-adrenaline</Vmax>
        <Vmax evidence="11">702.0 pmol/min/mg enzyme toward dopamine</Vmax>
        <Vmax evidence="11">7.0 pmol/min/mg enzyme toward serotonin</Vmax>
        <Vmax evidence="11">321.0 pmol/min/mg enzyme toward (R)-noradrenaline</Vmax>
        <Vmax evidence="11">309.0 pmol/min/mg enzyme toward 2-phenylethylamine</Vmax>
        <Vmax evidence="11">343.0 pmol/min/mg enzyme toward tyramine</Vmax>
    </kinetics>
</comment>
<comment type="subunit">
    <text evidence="1">Monomer, homo- or heterodimer (containing two subunits of similar size). Each subunit contains a covalently bound flavin. Enzymatically active as monomer (By similarity).</text>
</comment>
<comment type="interaction">
    <interactant intactId="EBI-3911344">
        <id>P27338</id>
    </interactant>
    <interactant intactId="EBI-718729">
        <id>P55212</id>
        <label>CASP6</label>
    </interactant>
    <organismsDiffer>false</organismsDiffer>
    <experiments>3</experiments>
</comment>
<comment type="interaction">
    <interactant intactId="EBI-3911344">
        <id>P27338</id>
    </interactant>
    <interactant intactId="EBI-25837549">
        <id>P28329-3</id>
        <label>CHAT</label>
    </interactant>
    <organismsDiffer>false</organismsDiffer>
    <experiments>3</experiments>
</comment>
<comment type="interaction">
    <interactant intactId="EBI-3911344">
        <id>P27338</id>
    </interactant>
    <interactant intactId="EBI-745535">
        <id>Q8NI60</id>
        <label>COQ8A</label>
    </interactant>
    <organismsDiffer>false</organismsDiffer>
    <experiments>3</experiments>
</comment>
<comment type="interaction">
    <interactant intactId="EBI-3911344">
        <id>P27338</id>
    </interactant>
    <interactant intactId="EBI-2834035">
        <id>Q5RI15</id>
        <label>COX20</label>
    </interactant>
    <organismsDiffer>false</organismsDiffer>
    <experiments>3</experiments>
</comment>
<comment type="interaction">
    <interactant intactId="EBI-3911344">
        <id>P27338</id>
    </interactant>
    <interactant intactId="EBI-12836320">
        <id>Q92915-2</id>
        <label>FGF14</label>
    </interactant>
    <organismsDiffer>false</organismsDiffer>
    <experiments>3</experiments>
</comment>
<comment type="interaction">
    <interactant intactId="EBI-3911344">
        <id>P27338</id>
    </interactant>
    <interactant intactId="EBI-348399">
        <id>P22607</id>
        <label>FGFR3</label>
    </interactant>
    <organismsDiffer>false</organismsDiffer>
    <experiments>3</experiments>
</comment>
<comment type="interaction">
    <interactant intactId="EBI-3911344">
        <id>P27338</id>
    </interactant>
    <interactant intactId="EBI-1955541">
        <id>Q53GS7</id>
        <label>GLE1</label>
    </interactant>
    <organismsDiffer>false</organismsDiffer>
    <experiments>3</experiments>
</comment>
<comment type="interaction">
    <interactant intactId="EBI-3911344">
        <id>P27338</id>
    </interactant>
    <interactant intactId="EBI-351506">
        <id>P06396</id>
        <label>GSN</label>
    </interactant>
    <organismsDiffer>false</organismsDiffer>
    <experiments>3</experiments>
</comment>
<comment type="interaction">
    <interactant intactId="EBI-3911344">
        <id>P27338</id>
    </interactant>
    <interactant intactId="EBI-350145">
        <id>P01112</id>
        <label>HRAS</label>
    </interactant>
    <organismsDiffer>false</organismsDiffer>
    <experiments>3</experiments>
</comment>
<comment type="interaction">
    <interactant intactId="EBI-3911344">
        <id>P27338</id>
    </interactant>
    <interactant intactId="EBI-948266">
        <id>O14901</id>
        <label>KLF11</label>
    </interactant>
    <organismsDiffer>false</organismsDiffer>
    <experiments>3</experiments>
</comment>
<comment type="interaction">
    <interactant intactId="EBI-3911344">
        <id>P27338</id>
    </interactant>
    <interactant intactId="EBI-21591415">
        <id>P13473-2</id>
        <label>LAMP2</label>
    </interactant>
    <organismsDiffer>false</organismsDiffer>
    <experiments>3</experiments>
</comment>
<comment type="interaction">
    <interactant intactId="EBI-3911344">
        <id>P27338</id>
    </interactant>
    <interactant intactId="EBI-1190845">
        <id>P21397</id>
        <label>MAOA</label>
    </interactant>
    <organismsDiffer>false</organismsDiffer>
    <experiments>3</experiments>
</comment>
<comment type="interaction">
    <interactant intactId="EBI-3911344">
        <id>P27338</id>
    </interactant>
    <interactant intactId="EBI-2811583">
        <id>Q9BVL2</id>
        <label>NUP58</label>
    </interactant>
    <organismsDiffer>false</organismsDiffer>
    <experiments>3</experiments>
</comment>
<comment type="interaction">
    <interactant intactId="EBI-3911344">
        <id>P27338</id>
    </interactant>
    <interactant intactId="EBI-5280197">
        <id>O75400-2</id>
        <label>PRPF40A</label>
    </interactant>
    <organismsDiffer>false</organismsDiffer>
    <experiments>3</experiments>
</comment>
<comment type="interaction">
    <interactant intactId="EBI-3911344">
        <id>P27338</id>
    </interactant>
    <interactant intactId="EBI-286642">
        <id>P62826</id>
        <label>RAN</label>
    </interactant>
    <organismsDiffer>false</organismsDiffer>
    <experiments>3</experiments>
</comment>
<comment type="interaction">
    <interactant intactId="EBI-3911344">
        <id>P27338</id>
    </interactant>
    <interactant intactId="EBI-17589229">
        <id>Q6NTF9-3</id>
        <label>RHBDD2</label>
    </interactant>
    <organismsDiffer>false</organismsDiffer>
    <experiments>3</experiments>
</comment>
<comment type="interaction">
    <interactant intactId="EBI-3911344">
        <id>P27338</id>
    </interactant>
    <interactant intactId="EBI-2623095">
        <id>Q9Y371</id>
        <label>SH3GLB1</label>
    </interactant>
    <organismsDiffer>false</organismsDiffer>
    <experiments>3</experiments>
</comment>
<comment type="interaction">
    <interactant intactId="EBI-3911344">
        <id>P27338</id>
    </interactant>
    <interactant intactId="EBI-5235340">
        <id>Q7Z699</id>
        <label>SPRED1</label>
    </interactant>
    <organismsDiffer>false</organismsDiffer>
    <experiments>3</experiments>
</comment>
<comment type="interaction">
    <interactant intactId="EBI-3911344">
        <id>P27338</id>
    </interactant>
    <interactant intactId="EBI-741480">
        <id>Q9UMX0</id>
        <label>UBQLN1</label>
    </interactant>
    <organismsDiffer>false</organismsDiffer>
    <experiments>3</experiments>
</comment>
<comment type="interaction">
    <interactant intactId="EBI-3911344">
        <id>P27338</id>
    </interactant>
    <interactant intactId="EBI-25900580">
        <id>Q9Y649</id>
    </interactant>
    <organismsDiffer>false</organismsDiffer>
    <experiments>3</experiments>
</comment>
<comment type="subcellular location">
    <subcellularLocation>
        <location>Mitochondrion outer membrane</location>
        <topology>Single-pass type IV membrane protein</topology>
        <orientation>Cytoplasmic side</orientation>
    </subcellularLocation>
</comment>
<comment type="alternative products">
    <event type="alternative splicing"/>
    <isoform>
        <id>P27338-1</id>
        <name>1</name>
        <sequence type="displayed"/>
    </isoform>
    <isoform>
        <id>P27338-2</id>
        <name>2</name>
        <sequence type="described" ref="VSP_057047 VSP_057048 VSP_057049"/>
    </isoform>
</comment>
<comment type="mass spectrometry"/>
<comment type="similarity">
    <text evidence="15">Belongs to the flavin monoamine oxidase family.</text>
</comment>
<comment type="online information" name="Wikipedia">
    <link uri="https://en.wikipedia.org/wiki/Monoamine_oxidase"/>
    <text>Monoamine oxidase entry</text>
</comment>
<keyword id="KW-0002">3D-structure</keyword>
<keyword id="KW-0007">Acetylation</keyword>
<keyword id="KW-0025">Alternative splicing</keyword>
<keyword id="KW-0903">Direct protein sequencing</keyword>
<keyword id="KW-0274">FAD</keyword>
<keyword id="KW-0285">Flavoprotein</keyword>
<keyword id="KW-0472">Membrane</keyword>
<keyword id="KW-0496">Mitochondrion</keyword>
<keyword id="KW-1000">Mitochondrion outer membrane</keyword>
<keyword id="KW-0560">Oxidoreductase</keyword>
<keyword id="KW-1267">Proteomics identification</keyword>
<keyword id="KW-1185">Reference proteome</keyword>
<keyword id="KW-0812">Transmembrane</keyword>
<keyword id="KW-1133">Transmembrane helix</keyword>
<feature type="initiator methionine" description="Removed" evidence="4">
    <location>
        <position position="1"/>
    </location>
</feature>
<feature type="chain" id="PRO_0000099859" description="Amine oxidase [flavin-containing] B">
    <location>
        <begin position="2"/>
        <end position="520"/>
    </location>
</feature>
<feature type="topological domain" description="Cytoplasmic">
    <location>
        <begin position="2"/>
        <end position="489"/>
    </location>
</feature>
<feature type="transmembrane region" description="Helical; Anchor for type IV membrane protein">
    <location>
        <begin position="490"/>
        <end position="516"/>
    </location>
</feature>
<feature type="topological domain" description="Mitochondrial intermembrane">
    <location>
        <begin position="517"/>
        <end position="520"/>
    </location>
</feature>
<feature type="site" description="Important for catalytic activity">
    <location>
        <position position="156"/>
    </location>
</feature>
<feature type="site" description="Important for catalytic activity">
    <location>
        <position position="365"/>
    </location>
</feature>
<feature type="site" description="Important for catalytic activity">
    <location>
        <position position="382"/>
    </location>
</feature>
<feature type="modified residue" description="N-acetylserine" evidence="4">
    <location>
        <position position="2"/>
    </location>
</feature>
<feature type="modified residue" description="N6-acetyllysine" evidence="3">
    <location>
        <position position="52"/>
    </location>
</feature>
<feature type="modified residue" description="S-8alpha-FAD cysteine" evidence="6 7 8 9 10 18 19 20 21 22 23 24 25 26 27 28 29 30 31 32 33 34 35 36 37 38 39 40 41 42 43 44 45 46 47 48 49 50 51 52 53 54 55">
    <location>
        <position position="397"/>
    </location>
</feature>
<feature type="splice variant" id="VSP_057047" description="In isoform 2.">
    <location>
        <begin position="1"/>
        <end position="16"/>
    </location>
</feature>
<feature type="splice variant" id="VSP_057048" description="In isoform 2." evidence="14">
    <original>PVHYEEKNWCEEQYSGGCYTTYFPPGILTQYGRVLRQPVDRIYFAGTE</original>
    <variation>GSTPASGQDLLCRHRDCHTLERLHGGGCRGRGESSPRDPACHGEDSRG</variation>
    <location>
        <begin position="380"/>
        <end position="427"/>
    </location>
</feature>
<feature type="splice variant" id="VSP_057049" description="In isoform 2." evidence="14">
    <location>
        <begin position="428"/>
        <end position="520"/>
    </location>
</feature>
<feature type="mutagenesis site" description="No loss of activity." evidence="12">
    <original>C</original>
    <variation>S</variation>
    <location>
        <position position="5"/>
    </location>
</feature>
<feature type="mutagenesis site" description="Complete loss of activity." evidence="12">
    <original>C</original>
    <variation>S</variation>
    <location>
        <position position="156"/>
    </location>
</feature>
<feature type="mutagenesis site" description="Dramatic loss of activity." evidence="13">
    <original>T</original>
    <variation>A</variation>
    <location>
        <position position="158"/>
    </location>
</feature>
<feature type="mutagenesis site" description="No loss of activity." evidence="12">
    <original>C</original>
    <variation>S</variation>
    <location>
        <position position="172"/>
    </location>
</feature>
<feature type="mutagenesis site" description="No loss of activity." evidence="12">
    <original>C</original>
    <variation>S</variation>
    <location>
        <position position="192"/>
    </location>
</feature>
<feature type="mutagenesis site" description="Alters specificity towards synthetic inhibitors.">
    <original>I</original>
    <variation>F</variation>
    <location>
        <position position="199"/>
    </location>
</feature>
<feature type="mutagenesis site" description="No loss of activity." evidence="12">
    <original>C</original>
    <variation>S</variation>
    <location>
        <position position="297"/>
    </location>
</feature>
<feature type="mutagenesis site" description="No loss of activity." evidence="12">
    <original>C</original>
    <variation>S</variation>
    <location>
        <position position="312"/>
    </location>
</feature>
<feature type="mutagenesis site" description="Complete loss of activity." evidence="12">
    <original>C</original>
    <variation>S</variation>
    <location>
        <position position="365"/>
    </location>
</feature>
<feature type="mutagenesis site" description="Significant loss of activity." evidence="13">
    <original>H</original>
    <variation>R</variation>
    <location>
        <position position="382"/>
    </location>
</feature>
<feature type="mutagenesis site" description="No loss of activity." evidence="13">
    <original>K</original>
    <variation>M</variation>
    <location>
        <position position="386"/>
    </location>
</feature>
<feature type="mutagenesis site" description="Complete loss of activity." evidence="12 13">
    <original>C</original>
    <variation>A</variation>
    <location>
        <position position="389"/>
    </location>
</feature>
<feature type="mutagenesis site" description="No loss of activity." evidence="12 13">
    <original>C</original>
    <variation>S</variation>
    <location>
        <position position="389"/>
    </location>
</feature>
<feature type="mutagenesis site" description="No loss of activity." evidence="13">
    <original>S</original>
    <variation>A</variation>
    <location>
        <position position="394"/>
    </location>
</feature>
<feature type="mutagenesis site" description="Complete loss of activity." evidence="12">
    <original>C</original>
    <variation>S</variation>
    <location>
        <position position="397"/>
    </location>
</feature>
<feature type="strand" evidence="56">
    <location>
        <begin position="6"/>
        <end position="10"/>
    </location>
</feature>
<feature type="helix" evidence="56">
    <location>
        <begin position="14"/>
        <end position="25"/>
    </location>
</feature>
<feature type="strand" evidence="56">
    <location>
        <begin position="30"/>
        <end position="33"/>
    </location>
</feature>
<feature type="strand" evidence="56">
    <location>
        <begin position="35"/>
        <end position="40"/>
    </location>
</feature>
<feature type="strand" evidence="58">
    <location>
        <begin position="45"/>
        <end position="48"/>
    </location>
</feature>
<feature type="turn" evidence="56">
    <location>
        <begin position="49"/>
        <end position="51"/>
    </location>
</feature>
<feature type="strand" evidence="56">
    <location>
        <begin position="54"/>
        <end position="57"/>
    </location>
</feature>
<feature type="helix" evidence="56">
    <location>
        <begin position="66"/>
        <end position="74"/>
    </location>
</feature>
<feature type="strand" evidence="56">
    <location>
        <begin position="79"/>
        <end position="81"/>
    </location>
</feature>
<feature type="strand" evidence="56">
    <location>
        <begin position="85"/>
        <end position="92"/>
    </location>
</feature>
<feature type="strand" evidence="56">
    <location>
        <begin position="95"/>
        <end position="99"/>
    </location>
</feature>
<feature type="strand" evidence="56">
    <location>
        <begin position="101"/>
        <end position="103"/>
    </location>
</feature>
<feature type="helix" evidence="56">
    <location>
        <begin position="109"/>
        <end position="126"/>
    </location>
</feature>
<feature type="helix" evidence="56">
    <location>
        <begin position="134"/>
        <end position="136"/>
    </location>
</feature>
<feature type="helix" evidence="56">
    <location>
        <begin position="140"/>
        <end position="144"/>
    </location>
</feature>
<feature type="strand" evidence="57">
    <location>
        <begin position="145"/>
        <end position="147"/>
    </location>
</feature>
<feature type="helix" evidence="56">
    <location>
        <begin position="148"/>
        <end position="155"/>
    </location>
</feature>
<feature type="helix" evidence="56">
    <location>
        <begin position="159"/>
        <end position="173"/>
    </location>
</feature>
<feature type="turn" evidence="56">
    <location>
        <begin position="177"/>
        <end position="179"/>
    </location>
</feature>
<feature type="helix" evidence="56">
    <location>
        <begin position="182"/>
        <end position="190"/>
    </location>
</feature>
<feature type="turn" evidence="56">
    <location>
        <begin position="191"/>
        <end position="193"/>
    </location>
</feature>
<feature type="helix" evidence="56">
    <location>
        <begin position="195"/>
        <end position="199"/>
    </location>
</feature>
<feature type="strand" evidence="56">
    <location>
        <begin position="207"/>
        <end position="210"/>
    </location>
</feature>
<feature type="helix" evidence="56">
    <location>
        <begin position="215"/>
        <end position="225"/>
    </location>
</feature>
<feature type="helix" evidence="56">
    <location>
        <begin position="226"/>
        <end position="228"/>
    </location>
</feature>
<feature type="strand" evidence="56">
    <location>
        <begin position="229"/>
        <end position="232"/>
    </location>
</feature>
<feature type="strand" evidence="56">
    <location>
        <begin position="235"/>
        <end position="239"/>
    </location>
</feature>
<feature type="strand" evidence="56">
    <location>
        <begin position="241"/>
        <end position="249"/>
    </location>
</feature>
<feature type="strand" evidence="56">
    <location>
        <begin position="254"/>
        <end position="262"/>
    </location>
</feature>
<feature type="helix" evidence="56">
    <location>
        <begin position="266"/>
        <end position="271"/>
    </location>
</feature>
<feature type="strand" evidence="56">
    <location>
        <begin position="272"/>
        <end position="276"/>
    </location>
</feature>
<feature type="helix" evidence="56">
    <location>
        <begin position="280"/>
        <end position="285"/>
    </location>
</feature>
<feature type="strand" evidence="56">
    <location>
        <begin position="294"/>
        <end position="300"/>
    </location>
</feature>
<feature type="helix" evidence="56">
    <location>
        <begin position="305"/>
        <end position="309"/>
    </location>
</feature>
<feature type="strand" evidence="56">
    <location>
        <begin position="311"/>
        <end position="317"/>
    </location>
</feature>
<feature type="strand" evidence="59">
    <location>
        <begin position="319"/>
        <end position="321"/>
    </location>
</feature>
<feature type="strand" evidence="56">
    <location>
        <begin position="325"/>
        <end position="329"/>
    </location>
</feature>
<feature type="strand" evidence="56">
    <location>
        <begin position="339"/>
        <end position="345"/>
    </location>
</feature>
<feature type="helix" evidence="56">
    <location>
        <begin position="347"/>
        <end position="352"/>
    </location>
</feature>
<feature type="helix" evidence="56">
    <location>
        <begin position="357"/>
        <end position="372"/>
    </location>
</feature>
<feature type="helix" evidence="56">
    <location>
        <begin position="375"/>
        <end position="378"/>
    </location>
</feature>
<feature type="strand" evidence="56">
    <location>
        <begin position="381"/>
        <end position="387"/>
    </location>
</feature>
<feature type="helix" evidence="56">
    <location>
        <begin position="388"/>
        <end position="390"/>
    </location>
</feature>
<feature type="turn" evidence="56">
    <location>
        <begin position="392"/>
        <end position="394"/>
    </location>
</feature>
<feature type="strand" evidence="56">
    <location>
        <begin position="396"/>
        <end position="398"/>
    </location>
</feature>
<feature type="helix" evidence="56">
    <location>
        <begin position="406"/>
        <end position="410"/>
    </location>
</feature>
<feature type="helix" evidence="56">
    <location>
        <begin position="411"/>
        <end position="413"/>
    </location>
</feature>
<feature type="strand" evidence="56">
    <location>
        <begin position="421"/>
        <end position="423"/>
    </location>
</feature>
<feature type="helix" evidence="56">
    <location>
        <begin position="426"/>
        <end position="428"/>
    </location>
</feature>
<feature type="strand" evidence="56">
    <location>
        <begin position="430"/>
        <end position="432"/>
    </location>
</feature>
<feature type="helix" evidence="56">
    <location>
        <begin position="436"/>
        <end position="453"/>
    </location>
</feature>
<feature type="helix" evidence="56">
    <location>
        <begin position="459"/>
        <end position="461"/>
    </location>
</feature>
<feature type="strand" evidence="56">
    <location>
        <begin position="470"/>
        <end position="472"/>
    </location>
</feature>
<feature type="helix" evidence="56">
    <location>
        <begin position="481"/>
        <end position="485"/>
    </location>
</feature>
<feature type="helix" evidence="56">
    <location>
        <begin position="489"/>
        <end position="500"/>
    </location>
</feature>
<proteinExistence type="evidence at protein level"/>
<dbReference type="EC" id="1.4.3.21" evidence="5 11 12 13"/>
<dbReference type="EC" id="1.4.3.4" evidence="11"/>
<dbReference type="EMBL" id="S62734">
    <property type="protein sequence ID" value="AAB27229.1"/>
    <property type="molecule type" value="mRNA"/>
</dbReference>
<dbReference type="EMBL" id="M69135">
    <property type="protein sequence ID" value="AAA59551.1"/>
    <property type="molecule type" value="Genomic_DNA"/>
</dbReference>
<dbReference type="EMBL" id="AK298942">
    <property type="protein sequence ID" value="BAH12909.1"/>
    <property type="molecule type" value="mRNA"/>
</dbReference>
<dbReference type="EMBL" id="AK312679">
    <property type="protein sequence ID" value="BAG35560.1"/>
    <property type="molecule type" value="mRNA"/>
</dbReference>
<dbReference type="EMBL" id="M69177">
    <property type="protein sequence ID" value="AAA59550.1"/>
    <property type="molecule type" value="mRNA"/>
</dbReference>
<dbReference type="EMBL" id="M89637">
    <property type="protein sequence ID" value="AAB46386.1"/>
    <property type="molecule type" value="Genomic_DNA"/>
</dbReference>
<dbReference type="EMBL" id="AL008709">
    <property type="status" value="NOT_ANNOTATED_CDS"/>
    <property type="molecule type" value="Genomic_DNA"/>
</dbReference>
<dbReference type="EMBL" id="AL020990">
    <property type="status" value="NOT_ANNOTATED_CDS"/>
    <property type="molecule type" value="Genomic_DNA"/>
</dbReference>
<dbReference type="EMBL" id="BX537148">
    <property type="status" value="NOT_ANNOTATED_CDS"/>
    <property type="molecule type" value="Genomic_DNA"/>
</dbReference>
<dbReference type="EMBL" id="Z95125">
    <property type="status" value="NOT_ANNOTATED_CDS"/>
    <property type="molecule type" value="Genomic_DNA"/>
</dbReference>
<dbReference type="EMBL" id="CH471141">
    <property type="protein sequence ID" value="EAW59378.1"/>
    <property type="molecule type" value="Genomic_DNA"/>
</dbReference>
<dbReference type="EMBL" id="CH471141">
    <property type="protein sequence ID" value="EAW59380.1"/>
    <property type="molecule type" value="Genomic_DNA"/>
</dbReference>
<dbReference type="CCDS" id="CCDS14261.1">
    <molecule id="P27338-1"/>
</dbReference>
<dbReference type="PIR" id="JH0817">
    <property type="entry name" value="JH0817"/>
</dbReference>
<dbReference type="RefSeq" id="NP_000889.3">
    <molecule id="P27338-1"/>
    <property type="nucleotide sequence ID" value="NM_000898.4"/>
</dbReference>
<dbReference type="PDB" id="1GOS">
    <property type="method" value="X-ray"/>
    <property type="resolution" value="3.00 A"/>
    <property type="chains" value="A/B=2-520"/>
</dbReference>
<dbReference type="PDB" id="1OJ9">
    <property type="method" value="X-ray"/>
    <property type="resolution" value="2.30 A"/>
    <property type="chains" value="A/B=2-520"/>
</dbReference>
<dbReference type="PDB" id="1OJA">
    <property type="method" value="X-ray"/>
    <property type="resolution" value="1.70 A"/>
    <property type="chains" value="A/B=2-520"/>
</dbReference>
<dbReference type="PDB" id="1OJC">
    <property type="method" value="X-ray"/>
    <property type="resolution" value="2.40 A"/>
    <property type="chains" value="A/B=2-520"/>
</dbReference>
<dbReference type="PDB" id="1OJD">
    <property type="method" value="X-ray"/>
    <property type="resolution" value="3.10 A"/>
    <property type="chains" value="A/B/C/D/E/F/G/H/I/L=2-520"/>
</dbReference>
<dbReference type="PDB" id="1S2Q">
    <property type="method" value="X-ray"/>
    <property type="resolution" value="2.07 A"/>
    <property type="chains" value="A/B=1-520"/>
</dbReference>
<dbReference type="PDB" id="1S2Y">
    <property type="method" value="X-ray"/>
    <property type="resolution" value="2.12 A"/>
    <property type="chains" value="A/B=1-520"/>
</dbReference>
<dbReference type="PDB" id="1S3B">
    <property type="method" value="X-ray"/>
    <property type="resolution" value="1.65 A"/>
    <property type="chains" value="A/B=1-520"/>
</dbReference>
<dbReference type="PDB" id="1S3E">
    <property type="method" value="X-ray"/>
    <property type="resolution" value="1.60 A"/>
    <property type="chains" value="A/B=1-520"/>
</dbReference>
<dbReference type="PDB" id="2BK3">
    <property type="method" value="X-ray"/>
    <property type="resolution" value="1.80 A"/>
    <property type="chains" value="A/B=2-520"/>
</dbReference>
<dbReference type="PDB" id="2BK4">
    <property type="method" value="X-ray"/>
    <property type="resolution" value="1.90 A"/>
    <property type="chains" value="A/B=2-520"/>
</dbReference>
<dbReference type="PDB" id="2BK5">
    <property type="method" value="X-ray"/>
    <property type="resolution" value="1.83 A"/>
    <property type="chains" value="A/B=1-520"/>
</dbReference>
<dbReference type="PDB" id="2BYB">
    <property type="method" value="X-ray"/>
    <property type="resolution" value="2.20 A"/>
    <property type="chains" value="A/B=2-520"/>
</dbReference>
<dbReference type="PDB" id="2C64">
    <property type="method" value="X-ray"/>
    <property type="resolution" value="2.20 A"/>
    <property type="chains" value="A/B=2-520"/>
</dbReference>
<dbReference type="PDB" id="2C65">
    <property type="method" value="X-ray"/>
    <property type="resolution" value="1.70 A"/>
    <property type="chains" value="A/B=2-520"/>
</dbReference>
<dbReference type="PDB" id="2C66">
    <property type="method" value="X-ray"/>
    <property type="resolution" value="2.50 A"/>
    <property type="chains" value="A/B=2-520"/>
</dbReference>
<dbReference type="PDB" id="2C67">
    <property type="method" value="X-ray"/>
    <property type="resolution" value="1.70 A"/>
    <property type="chains" value="A/B=2-520"/>
</dbReference>
<dbReference type="PDB" id="2C70">
    <property type="method" value="X-ray"/>
    <property type="resolution" value="2.06 A"/>
    <property type="chains" value="A/B=2-520"/>
</dbReference>
<dbReference type="PDB" id="2C72">
    <property type="method" value="X-ray"/>
    <property type="resolution" value="2.00 A"/>
    <property type="chains" value="A/B=2-520"/>
</dbReference>
<dbReference type="PDB" id="2C73">
    <property type="method" value="X-ray"/>
    <property type="resolution" value="2.20 A"/>
    <property type="chains" value="A/B=2-520"/>
</dbReference>
<dbReference type="PDB" id="2C75">
    <property type="method" value="X-ray"/>
    <property type="resolution" value="1.70 A"/>
    <property type="chains" value="A/B=2-520"/>
</dbReference>
<dbReference type="PDB" id="2C76">
    <property type="method" value="X-ray"/>
    <property type="resolution" value="1.70 A"/>
    <property type="chains" value="A/B=2-520"/>
</dbReference>
<dbReference type="PDB" id="2V5Z">
    <property type="method" value="X-ray"/>
    <property type="resolution" value="1.60 A"/>
    <property type="chains" value="A/B=2-520"/>
</dbReference>
<dbReference type="PDB" id="2V60">
    <property type="method" value="X-ray"/>
    <property type="resolution" value="2.00 A"/>
    <property type="chains" value="A/B=2-520"/>
</dbReference>
<dbReference type="PDB" id="2V61">
    <property type="method" value="X-ray"/>
    <property type="resolution" value="1.70 A"/>
    <property type="chains" value="A/B=2-520"/>
</dbReference>
<dbReference type="PDB" id="2VRL">
    <property type="method" value="X-ray"/>
    <property type="resolution" value="2.40 A"/>
    <property type="chains" value="A/B=1-520"/>
</dbReference>
<dbReference type="PDB" id="2VRM">
    <property type="method" value="X-ray"/>
    <property type="resolution" value="2.30 A"/>
    <property type="chains" value="A/B=1-520"/>
</dbReference>
<dbReference type="PDB" id="2VZ2">
    <property type="method" value="X-ray"/>
    <property type="resolution" value="2.30 A"/>
    <property type="chains" value="A/B=1-520"/>
</dbReference>
<dbReference type="PDB" id="2XCG">
    <property type="method" value="X-ray"/>
    <property type="resolution" value="1.90 A"/>
    <property type="chains" value="A/B=1-520"/>
</dbReference>
<dbReference type="PDB" id="2XFN">
    <property type="method" value="X-ray"/>
    <property type="resolution" value="1.60 A"/>
    <property type="chains" value="A/B=1-520"/>
</dbReference>
<dbReference type="PDB" id="2XFO">
    <property type="method" value="X-ray"/>
    <property type="resolution" value="2.10 A"/>
    <property type="chains" value="A/B=1-520"/>
</dbReference>
<dbReference type="PDB" id="2XFP">
    <property type="method" value="X-ray"/>
    <property type="resolution" value="1.66 A"/>
    <property type="chains" value="A/B=1-520"/>
</dbReference>
<dbReference type="PDB" id="2XFQ">
    <property type="method" value="X-ray"/>
    <property type="resolution" value="2.20 A"/>
    <property type="chains" value="A/B=1-520"/>
</dbReference>
<dbReference type="PDB" id="2XFU">
    <property type="method" value="X-ray"/>
    <property type="resolution" value="2.20 A"/>
    <property type="chains" value="A/B=2-520"/>
</dbReference>
<dbReference type="PDB" id="3PO7">
    <property type="method" value="X-ray"/>
    <property type="resolution" value="1.80 A"/>
    <property type="chains" value="A/B=1-520"/>
</dbReference>
<dbReference type="PDB" id="3ZYX">
    <property type="method" value="X-ray"/>
    <property type="resolution" value="2.20 A"/>
    <property type="chains" value="A/B=2-520"/>
</dbReference>
<dbReference type="PDB" id="4A79">
    <property type="method" value="X-ray"/>
    <property type="resolution" value="1.89 A"/>
    <property type="chains" value="A/B=1-520"/>
</dbReference>
<dbReference type="PDB" id="4A7A">
    <property type="method" value="X-ray"/>
    <property type="resolution" value="1.70 A"/>
    <property type="chains" value="A/B=1-520"/>
</dbReference>
<dbReference type="PDB" id="4CRT">
    <property type="method" value="X-ray"/>
    <property type="resolution" value="1.80 A"/>
    <property type="chains" value="A/B=1-520"/>
</dbReference>
<dbReference type="PDB" id="5MRL">
    <property type="method" value="X-ray"/>
    <property type="resolution" value="2.42 A"/>
    <property type="chains" value="A/B=1-520"/>
</dbReference>
<dbReference type="PDB" id="6FVZ">
    <property type="method" value="X-ray"/>
    <property type="resolution" value="1.80 A"/>
    <property type="chains" value="A/B=1-520"/>
</dbReference>
<dbReference type="PDB" id="6FW0">
    <property type="method" value="X-ray"/>
    <property type="resolution" value="1.60 A"/>
    <property type="chains" value="A/B=1-520"/>
</dbReference>
<dbReference type="PDB" id="6FWC">
    <property type="method" value="X-ray"/>
    <property type="resolution" value="1.70 A"/>
    <property type="chains" value="A/B=1-520"/>
</dbReference>
<dbReference type="PDB" id="6RKB">
    <property type="method" value="X-ray"/>
    <property type="resolution" value="2.30 A"/>
    <property type="chains" value="A/B=1-520"/>
</dbReference>
<dbReference type="PDB" id="6RKP">
    <property type="method" value="X-ray"/>
    <property type="resolution" value="1.70 A"/>
    <property type="chains" value="A/B=1-520"/>
</dbReference>
<dbReference type="PDB" id="6RLE">
    <property type="method" value="X-ray"/>
    <property type="resolution" value="2.30 A"/>
    <property type="chains" value="A/B=1-520"/>
</dbReference>
<dbReference type="PDB" id="6YT2">
    <property type="method" value="X-ray"/>
    <property type="resolution" value="1.80 A"/>
    <property type="chains" value="A/B=2-520"/>
</dbReference>
<dbReference type="PDB" id="7B0V">
    <property type="method" value="X-ray"/>
    <property type="resolution" value="2.30 A"/>
    <property type="chains" value="A/B=1-520"/>
</dbReference>
<dbReference type="PDB" id="7B0Z">
    <property type="method" value="X-ray"/>
    <property type="resolution" value="2.10 A"/>
    <property type="chains" value="A/B=1-520"/>
</dbReference>
<dbReference type="PDB" id="7P4F">
    <property type="method" value="X-ray"/>
    <property type="resolution" value="2.30 A"/>
    <property type="chains" value="A/B=1-520"/>
</dbReference>
<dbReference type="PDB" id="7P4H">
    <property type="method" value="X-ray"/>
    <property type="resolution" value="2.10 A"/>
    <property type="chains" value="A/B=1-520"/>
</dbReference>
<dbReference type="PDB" id="7ZW3">
    <property type="method" value="X-ray"/>
    <property type="resolution" value="2.00 A"/>
    <property type="chains" value="AAA/BBB=1-520"/>
</dbReference>
<dbReference type="PDB" id="9FJT">
    <property type="method" value="X-ray"/>
    <property type="resolution" value="1.40 A"/>
    <property type="chains" value="AAA/BBB=1-520"/>
</dbReference>
<dbReference type="PDBsum" id="1GOS"/>
<dbReference type="PDBsum" id="1OJ9"/>
<dbReference type="PDBsum" id="1OJA"/>
<dbReference type="PDBsum" id="1OJC"/>
<dbReference type="PDBsum" id="1OJD"/>
<dbReference type="PDBsum" id="1S2Q"/>
<dbReference type="PDBsum" id="1S2Y"/>
<dbReference type="PDBsum" id="1S3B"/>
<dbReference type="PDBsum" id="1S3E"/>
<dbReference type="PDBsum" id="2BK3"/>
<dbReference type="PDBsum" id="2BK4"/>
<dbReference type="PDBsum" id="2BK5"/>
<dbReference type="PDBsum" id="2BYB"/>
<dbReference type="PDBsum" id="2C64"/>
<dbReference type="PDBsum" id="2C65"/>
<dbReference type="PDBsum" id="2C66"/>
<dbReference type="PDBsum" id="2C67"/>
<dbReference type="PDBsum" id="2C70"/>
<dbReference type="PDBsum" id="2C72"/>
<dbReference type="PDBsum" id="2C73"/>
<dbReference type="PDBsum" id="2C75"/>
<dbReference type="PDBsum" id="2C76"/>
<dbReference type="PDBsum" id="2V5Z"/>
<dbReference type="PDBsum" id="2V60"/>
<dbReference type="PDBsum" id="2V61"/>
<dbReference type="PDBsum" id="2VRL"/>
<dbReference type="PDBsum" id="2VRM"/>
<dbReference type="PDBsum" id="2VZ2"/>
<dbReference type="PDBsum" id="2XCG"/>
<dbReference type="PDBsum" id="2XFN"/>
<dbReference type="PDBsum" id="2XFO"/>
<dbReference type="PDBsum" id="2XFP"/>
<dbReference type="PDBsum" id="2XFQ"/>
<dbReference type="PDBsum" id="2XFU"/>
<dbReference type="PDBsum" id="3PO7"/>
<dbReference type="PDBsum" id="3ZYX"/>
<dbReference type="PDBsum" id="4A79"/>
<dbReference type="PDBsum" id="4A7A"/>
<dbReference type="PDBsum" id="4CRT"/>
<dbReference type="PDBsum" id="5MRL"/>
<dbReference type="PDBsum" id="6FVZ"/>
<dbReference type="PDBsum" id="6FW0"/>
<dbReference type="PDBsum" id="6FWC"/>
<dbReference type="PDBsum" id="6RKB"/>
<dbReference type="PDBsum" id="6RKP"/>
<dbReference type="PDBsum" id="6RLE"/>
<dbReference type="PDBsum" id="6YT2"/>
<dbReference type="PDBsum" id="7B0V"/>
<dbReference type="PDBsum" id="7B0Z"/>
<dbReference type="PDBsum" id="7P4F"/>
<dbReference type="PDBsum" id="7P4H"/>
<dbReference type="PDBsum" id="7ZW3"/>
<dbReference type="PDBsum" id="9FJT"/>
<dbReference type="SMR" id="P27338"/>
<dbReference type="BioGRID" id="110302">
    <property type="interactions" value="69"/>
</dbReference>
<dbReference type="CORUM" id="P27338"/>
<dbReference type="FunCoup" id="P27338">
    <property type="interactions" value="650"/>
</dbReference>
<dbReference type="IntAct" id="P27338">
    <property type="interactions" value="50"/>
</dbReference>
<dbReference type="MINT" id="P27338"/>
<dbReference type="STRING" id="9606.ENSP00000367309"/>
<dbReference type="BindingDB" id="P27338"/>
<dbReference type="ChEMBL" id="CHEMBL2039"/>
<dbReference type="DrugBank" id="DB08176">
    <property type="generic name" value="(1Z)-4-(4-FLUOROPHENYL)-2-METHYLIDENEBUTAN-1-IMINE"/>
</dbReference>
<dbReference type="DrugBank" id="DB02211">
    <property type="generic name" value="(R)-N-methyl-N-2-propynyl-1-indanamine"/>
</dbReference>
<dbReference type="DrugBank" id="DB08516">
    <property type="generic name" value="(S)-(+)-2-[4-(FLUOROBENZYLOXY-BENZYLAMINO)PROPIONAMIDE]"/>
</dbReference>
<dbReference type="DrugBank" id="DB08480">
    <property type="generic name" value="4-HYDROXY-N-PROPARGYL-1(R)-AMINOINDAN"/>
</dbReference>
<dbReference type="DrugBank" id="DB04242">
    <property type="generic name" value="4-hydroxybenzoic acid"/>
</dbReference>
<dbReference type="DrugBank" id="DB01472">
    <property type="generic name" value="4-Methoxyamphetamine"/>
</dbReference>
<dbReference type="DrugBank" id="DB04307">
    <property type="generic name" value="5-Hydroxy-N-Propargyl-1(R)-Aminoindan"/>
</dbReference>
<dbReference type="DrugBank" id="DB04769">
    <property type="generic name" value="5-QUINOXALIN-6-YLMETHYLENE-THIAZOLIDINE-2,4-DIONE"/>
</dbReference>
<dbReference type="DrugBank" id="DB07512">
    <property type="generic name" value="7-[(3-CHLOROBENZYL)OXY]-2-OXO-2H-CHROMENE-4-CARBALDEHYDE"/>
</dbReference>
<dbReference type="DrugBank" id="DB07513">
    <property type="generic name" value="7-[(3-CHLOROBENZYL)OXY]-4-[(METHYLAMINO)METHYL]-2H-CHROMEN-2-ONE"/>
</dbReference>
<dbReference type="DrugBank" id="DB00915">
    <property type="generic name" value="Amantadine"/>
</dbReference>
<dbReference type="DrugBank" id="DB00182">
    <property type="generic name" value="Amphetamine"/>
</dbReference>
<dbReference type="DrugBank" id="DB06698">
    <property type="generic name" value="Betahistine"/>
</dbReference>
<dbReference type="DrugBank" id="DB04889">
    <property type="generic name" value="Bicifadine"/>
</dbReference>
<dbReference type="DrugBank" id="DB13502">
    <property type="generic name" value="Budipine"/>
</dbReference>
<dbReference type="DrugBank" id="DB00215">
    <property type="generic name" value="Citalopram"/>
</dbReference>
<dbReference type="DrugBank" id="DB09130">
    <property type="generic name" value="Copper"/>
</dbReference>
<dbReference type="DrugBank" id="DB04147">
    <property type="generic name" value="Dodecyldimethylamine N-oxide"/>
</dbReference>
<dbReference type="DrugBank" id="DB00988">
    <property type="generic name" value="Dopamine"/>
</dbReference>
<dbReference type="DrugBank" id="DB01363">
    <property type="generic name" value="Ephedra sinica root"/>
</dbReference>
<dbReference type="DrugBank" id="DB00668">
    <property type="generic name" value="Epinephrine"/>
</dbReference>
<dbReference type="DrugBank" id="DB01175">
    <property type="generic name" value="Escitalopram"/>
</dbReference>
<dbReference type="DrugBank" id="DB09086">
    <property type="generic name" value="Eugenol"/>
</dbReference>
<dbReference type="DrugBank" id="DB06057">
    <property type="generic name" value="EVT 302"/>
</dbReference>
<dbReference type="DrugBank" id="DB02509">
    <property type="generic name" value="Farnesol"/>
</dbReference>
<dbReference type="DrugBank" id="DB07767">
    <property type="generic name" value="Ferulic acid"/>
</dbReference>
<dbReference type="DrugBank" id="DB03147">
    <property type="generic name" value="Flavin adenine dinucleotide"/>
</dbReference>
<dbReference type="DrugBank" id="DB14914">
    <property type="generic name" value="Flortaucipir F-18"/>
</dbReference>
<dbReference type="DrugBank" id="DB00614">
    <property type="generic name" value="Furazolidone"/>
</dbReference>
<dbReference type="DrugBank" id="DB12664">
    <property type="generic name" value="Indantadol"/>
</dbReference>
<dbReference type="DrugBank" id="DB04818">
    <property type="generic name" value="Iproniazid"/>
</dbReference>
<dbReference type="DrugBank" id="DB02095">
    <property type="generic name" value="Isatin"/>
</dbReference>
<dbReference type="DrugBank" id="DB01247">
    <property type="generic name" value="Isocarboxazid"/>
</dbReference>
<dbReference type="DrugBank" id="DB16213">
    <property type="generic name" value="Ladostigil"/>
</dbReference>
<dbReference type="DrugBank" id="DB00601">
    <property type="generic name" value="Linezolid"/>
</dbReference>
<dbReference type="DrugBank" id="DB01577">
    <property type="generic name" value="Metamfetamine"/>
</dbReference>
<dbReference type="DrugBank" id="DB01442">
    <property type="generic name" value="MMDA"/>
</dbReference>
<dbReference type="DrugBank" id="DB01171">
    <property type="generic name" value="Moclobemide"/>
</dbReference>
<dbReference type="DrugBank" id="DB08082">
    <property type="generic name" value="N-(2-AMINOETHYL)-P-CHLOROBENZAMIDE"/>
</dbReference>
<dbReference type="DrugBank" id="DB02643">
    <property type="generic name" value="N-Dodecyl-N,N-Dimethyl-3-Ammonio-1-Propanesulfonate"/>
</dbReference>
<dbReference type="DrugBank" id="DB04677">
    <property type="generic name" value="N-METHYL-N-[(1R)-1-METHYL-2-PHENYLETHYL]PROP-2-EN-1-AMINE"/>
</dbReference>
<dbReference type="DrugBank" id="DB03894">
    <property type="generic name" value="N-Propargyl-1(S)-Aminoindan"/>
</dbReference>
<dbReference type="DrugBank" id="DB08804">
    <property type="generic name" value="Nandrolone decanoate"/>
</dbReference>
<dbReference type="DrugBank" id="DB04820">
    <property type="generic name" value="Nialamide"/>
</dbReference>
<dbReference type="DrugBank" id="DB00184">
    <property type="generic name" value="Nicotine"/>
</dbReference>
<dbReference type="DrugBank" id="DB04821">
    <property type="generic name" value="Nomifensine"/>
</dbReference>
<dbReference type="DrugBank" id="DB12612">
    <property type="generic name" value="Ozanimod"/>
</dbReference>
<dbReference type="DrugBank" id="DB03560">
    <property type="generic name" value="P-Hydroxybenzaldehyde"/>
</dbReference>
<dbReference type="DrugBank" id="DB01626">
    <property type="generic name" value="Pargyline"/>
</dbReference>
<dbReference type="DrugBank" id="DB00780">
    <property type="generic name" value="Phenelzine"/>
</dbReference>
<dbReference type="DrugBank" id="DB00191">
    <property type="generic name" value="Phentermine"/>
</dbReference>
<dbReference type="DrugBank" id="DB00388">
    <property type="generic name" value="Phenylephrine"/>
</dbReference>
<dbReference type="DrugBank" id="DB01132">
    <property type="generic name" value="Pioglitazone"/>
</dbReference>
<dbReference type="DrugBank" id="DB12582">
    <property type="generic name" value="Piperine"/>
</dbReference>
<dbReference type="DrugBank" id="DB00721">
    <property type="generic name" value="Procaine"/>
</dbReference>
<dbReference type="DrugBank" id="DB01168">
    <property type="generic name" value="Procarbazine"/>
</dbReference>
<dbReference type="DrugBank" id="DB11268">
    <property type="generic name" value="Protocatechualdehyde"/>
</dbReference>
<dbReference type="DrugBank" id="DB18665">
    <property type="generic name" value="Psoralen"/>
</dbReference>
<dbReference type="DrugBank" id="DB01367">
    <property type="generic name" value="Rasagiline"/>
</dbReference>
<dbReference type="DrugBank" id="DB09363">
    <property type="generic name" value="Rauwolfia serpentina root"/>
</dbReference>
<dbReference type="DrugBank" id="DB06654">
    <property type="generic name" value="Safinamide"/>
</dbReference>
<dbReference type="DrugBank" id="DB01037">
    <property type="generic name" value="Selegiline"/>
</dbReference>
<dbReference type="DrugBank" id="DB01104">
    <property type="generic name" value="Sertraline"/>
</dbReference>
<dbReference type="DrugBank" id="DB01299">
    <property type="generic name" value="Sulfadoxine"/>
</dbReference>
<dbReference type="DrugBank" id="DB14569">
    <property type="generic name" value="Tedizolid"/>
</dbReference>
<dbReference type="DrugBank" id="DB09042">
    <property type="generic name" value="Tedizolid phosphate"/>
</dbReference>
<dbReference type="DrugBank" id="DB09245">
    <property type="generic name" value="Toloxatone"/>
</dbReference>
<dbReference type="DrugBank" id="DB00752">
    <property type="generic name" value="Tranylcypromine"/>
</dbReference>
<dbReference type="DrugBank" id="DB08653">
    <property type="generic name" value="Tryptamine"/>
</dbReference>
<dbReference type="DrugBank" id="DB16446">
    <property type="generic name" value="Vafidemstat"/>
</dbReference>
<dbReference type="DrugBank" id="DB09185">
    <property type="generic name" value="Viloxazine"/>
</dbReference>
<dbReference type="DrugBank" id="DB04832">
    <property type="generic name" value="Zimelidine"/>
</dbReference>
<dbReference type="DrugBank" id="DB00909">
    <property type="generic name" value="Zonisamide"/>
</dbReference>
<dbReference type="DrugCentral" id="P27338"/>
<dbReference type="GuidetoPHARMACOLOGY" id="2490"/>
<dbReference type="CarbonylDB" id="P27338"/>
<dbReference type="GlyGen" id="P27338">
    <property type="glycosylation" value="2 sites, 1 O-linked glycan (1 site)"/>
</dbReference>
<dbReference type="iPTMnet" id="P27338"/>
<dbReference type="PhosphoSitePlus" id="P27338"/>
<dbReference type="SwissPalm" id="P27338"/>
<dbReference type="BioMuta" id="MAOB"/>
<dbReference type="DMDM" id="113980"/>
<dbReference type="jPOST" id="P27338"/>
<dbReference type="MassIVE" id="P27338"/>
<dbReference type="PaxDb" id="9606-ENSP00000367309"/>
<dbReference type="PeptideAtlas" id="P27338"/>
<dbReference type="ProteomicsDB" id="54379">
    <molecule id="P27338-1"/>
</dbReference>
<dbReference type="ProteomicsDB" id="6695"/>
<dbReference type="Pumba" id="P27338"/>
<dbReference type="Antibodypedia" id="770">
    <property type="antibodies" value="377 antibodies from 37 providers"/>
</dbReference>
<dbReference type="DNASU" id="4129"/>
<dbReference type="Ensembl" id="ENST00000378069.5">
    <molecule id="P27338-1"/>
    <property type="protein sequence ID" value="ENSP00000367309.4"/>
    <property type="gene ID" value="ENSG00000069535.14"/>
</dbReference>
<dbReference type="GeneID" id="4129"/>
<dbReference type="KEGG" id="hsa:4129"/>
<dbReference type="MANE-Select" id="ENST00000378069.5">
    <property type="protein sequence ID" value="ENSP00000367309.4"/>
    <property type="RefSeq nucleotide sequence ID" value="NM_000898.5"/>
    <property type="RefSeq protein sequence ID" value="NP_000889.3"/>
</dbReference>
<dbReference type="UCSC" id="uc004dfz.5">
    <molecule id="P27338-1"/>
    <property type="organism name" value="human"/>
</dbReference>
<dbReference type="AGR" id="HGNC:6834"/>
<dbReference type="CTD" id="4129"/>
<dbReference type="DisGeNET" id="4129"/>
<dbReference type="GeneCards" id="MAOB"/>
<dbReference type="HGNC" id="HGNC:6834">
    <property type="gene designation" value="MAOB"/>
</dbReference>
<dbReference type="HPA" id="ENSG00000069535">
    <property type="expression patterns" value="Tissue enhanced (liver)"/>
</dbReference>
<dbReference type="MIM" id="309860">
    <property type="type" value="gene"/>
</dbReference>
<dbReference type="neXtProt" id="NX_P27338"/>
<dbReference type="OpenTargets" id="ENSG00000069535"/>
<dbReference type="PharmGKB" id="PA237"/>
<dbReference type="VEuPathDB" id="HostDB:ENSG00000069535"/>
<dbReference type="eggNOG" id="KOG0029">
    <property type="taxonomic scope" value="Eukaryota"/>
</dbReference>
<dbReference type="GeneTree" id="ENSGT00940000161545"/>
<dbReference type="HOGENOM" id="CLU_004498_0_1_1"/>
<dbReference type="InParanoid" id="P27338"/>
<dbReference type="OMA" id="PIHWAGT"/>
<dbReference type="OrthoDB" id="7777654at2759"/>
<dbReference type="PAN-GO" id="P27338">
    <property type="GO annotations" value="3 GO annotations based on evolutionary models"/>
</dbReference>
<dbReference type="PhylomeDB" id="P27338"/>
<dbReference type="TreeFam" id="TF313314"/>
<dbReference type="BioCyc" id="MetaCyc:HS00966-MONOMER"/>
<dbReference type="BRENDA" id="1.4.3.4">
    <property type="organism ID" value="2681"/>
</dbReference>
<dbReference type="PathwayCommons" id="P27338"/>
<dbReference type="Reactome" id="R-HSA-141333">
    <property type="pathway name" value="Biogenic amines are oxidatively deaminated to aldehydes by MAOA and MAOB"/>
</dbReference>
<dbReference type="SABIO-RK" id="P27338"/>
<dbReference type="SignaLink" id="P27338"/>
<dbReference type="SIGNOR" id="P27338"/>
<dbReference type="BioGRID-ORCS" id="4129">
    <property type="hits" value="8 hits in 796 CRISPR screens"/>
</dbReference>
<dbReference type="CD-CODE" id="FB4E32DD">
    <property type="entry name" value="Presynaptic clusters and postsynaptic densities"/>
</dbReference>
<dbReference type="ChiTaRS" id="MAOB">
    <property type="organism name" value="human"/>
</dbReference>
<dbReference type="EvolutionaryTrace" id="P27338"/>
<dbReference type="GeneWiki" id="Monoamine_oxidase_B"/>
<dbReference type="GenomeRNAi" id="4129"/>
<dbReference type="Pharos" id="P27338">
    <property type="development level" value="Tclin"/>
</dbReference>
<dbReference type="PRO" id="PR:P27338"/>
<dbReference type="Proteomes" id="UP000005640">
    <property type="component" value="Chromosome X"/>
</dbReference>
<dbReference type="RNAct" id="P27338">
    <property type="molecule type" value="protein"/>
</dbReference>
<dbReference type="Bgee" id="ENSG00000069535">
    <property type="expression patterns" value="Expressed in saphenous vein and 188 other cell types or tissues"/>
</dbReference>
<dbReference type="GO" id="GO:0005740">
    <property type="term" value="C:mitochondrial envelope"/>
    <property type="evidence" value="ECO:0000304"/>
    <property type="project" value="ProtInc"/>
</dbReference>
<dbReference type="GO" id="GO:0005741">
    <property type="term" value="C:mitochondrial outer membrane"/>
    <property type="evidence" value="ECO:0000304"/>
    <property type="project" value="ParkinsonsUK-UCL"/>
</dbReference>
<dbReference type="GO" id="GO:0005739">
    <property type="term" value="C:mitochondrion"/>
    <property type="evidence" value="ECO:0007005"/>
    <property type="project" value="UniProtKB"/>
</dbReference>
<dbReference type="GO" id="GO:0009055">
    <property type="term" value="F:electron transfer activity"/>
    <property type="evidence" value="ECO:0000304"/>
    <property type="project" value="UniProtKB"/>
</dbReference>
<dbReference type="GO" id="GO:0050660">
    <property type="term" value="F:flavin adenine dinucleotide binding"/>
    <property type="evidence" value="ECO:0000318"/>
    <property type="project" value="GO_Central"/>
</dbReference>
<dbReference type="GO" id="GO:0097621">
    <property type="term" value="F:monoamine oxidase activity"/>
    <property type="evidence" value="ECO:0000314"/>
    <property type="project" value="UniProtKB"/>
</dbReference>
<dbReference type="GO" id="GO:0008131">
    <property type="term" value="F:primary methylamine oxidase activity"/>
    <property type="evidence" value="ECO:0000314"/>
    <property type="project" value="UniProtKB"/>
</dbReference>
<dbReference type="GO" id="GO:0042420">
    <property type="term" value="P:dopamine catabolic process"/>
    <property type="evidence" value="ECO:0000304"/>
    <property type="project" value="ParkinsonsUK-UCL"/>
</dbReference>
<dbReference type="GO" id="GO:0050665">
    <property type="term" value="P:hydrogen peroxide biosynthetic process"/>
    <property type="evidence" value="ECO:0000303"/>
    <property type="project" value="ParkinsonsUK-UCL"/>
</dbReference>
<dbReference type="GO" id="GO:0021762">
    <property type="term" value="P:substantia nigra development"/>
    <property type="evidence" value="ECO:0007007"/>
    <property type="project" value="UniProtKB"/>
</dbReference>
<dbReference type="FunFam" id="1.10.405.10:FF:000005">
    <property type="entry name" value="Amine oxidase [flavin-containing]"/>
    <property type="match status" value="1"/>
</dbReference>
<dbReference type="Gene3D" id="3.90.660.10">
    <property type="match status" value="1"/>
</dbReference>
<dbReference type="Gene3D" id="6.10.250.130">
    <property type="match status" value="1"/>
</dbReference>
<dbReference type="Gene3D" id="3.50.50.60">
    <property type="entry name" value="FAD/NAD(P)-binding domain"/>
    <property type="match status" value="1"/>
</dbReference>
<dbReference type="Gene3D" id="1.10.405.10">
    <property type="entry name" value="Guanine Nucleotide Dissociation Inhibitor, domain 1"/>
    <property type="match status" value="1"/>
</dbReference>
<dbReference type="InterPro" id="IPR002937">
    <property type="entry name" value="Amino_oxidase"/>
</dbReference>
<dbReference type="InterPro" id="IPR036188">
    <property type="entry name" value="FAD/NAD-bd_sf"/>
</dbReference>
<dbReference type="InterPro" id="IPR001613">
    <property type="entry name" value="Flavin_amine_oxidase"/>
</dbReference>
<dbReference type="InterPro" id="IPR050703">
    <property type="entry name" value="Flavin_MAO"/>
</dbReference>
<dbReference type="PANTHER" id="PTHR43563">
    <property type="entry name" value="AMINE OXIDASE"/>
    <property type="match status" value="1"/>
</dbReference>
<dbReference type="PANTHER" id="PTHR43563:SF1">
    <property type="entry name" value="AMINE OXIDASE [FLAVIN-CONTAINING] B"/>
    <property type="match status" value="1"/>
</dbReference>
<dbReference type="Pfam" id="PF01593">
    <property type="entry name" value="Amino_oxidase"/>
    <property type="match status" value="1"/>
</dbReference>
<dbReference type="PRINTS" id="PR00757">
    <property type="entry name" value="AMINEOXDASEF"/>
</dbReference>
<dbReference type="SUPFAM" id="SSF54373">
    <property type="entry name" value="FAD-linked reductases, C-terminal domain"/>
    <property type="match status" value="1"/>
</dbReference>
<dbReference type="SUPFAM" id="SSF51905">
    <property type="entry name" value="FAD/NAD(P)-binding domain"/>
    <property type="match status" value="1"/>
</dbReference>
<sequence>MSNKCDVVVVGGGISGMAAAKLLHDSGLNVVVLEARDRVGGRTYTLRNQKVKYVDLGGSYVGPTQNRILRLAKELGLETYKVNEVERLIHHVKGKSYPFRGPFPPVWNPITYLDHNNFWRTMDDMGREIPSDAPWKAPLAEEWDNMTMKELLDKLCWTESAKQLATLFVNLCVTAETHEVSALWFLWYVKQCGGTTRIISTTNGGQERKFVGGSGQVSERIMDLLGDRVKLERPVIYIDQTRENVLVETLNHEMYEAKYVISAIPPTLGMKIHFNPPLPMMRNQMITRVPLGSVIKCIVYYKEPFWRKKDYCGTMIIDGEEAPVAYTLDDTKPEGNYAAIMGFILAHKARKLARLTKEERLKKLCELYAKVLGSLEALEPVHYEEKNWCEEQYSGGCYTTYFPPGILTQYGRVLRQPVDRIYFAGTETATHWSGYMEGAVEAGERAAREILHAMGKIPEDEIWQSEPESVDVPAQPITTTFLERHLPSVPGLLRLIGLTTIFSATALGFLAHKRGLLVRV</sequence>
<reference key="1">
    <citation type="journal article" date="1991" name="Proc. Natl. Acad. Sci. U.S.A.">
        <title>Human monoamine oxidase A and B genes exhibit identical exon-intron organization.</title>
        <authorList>
            <person name="Grimsby J."/>
            <person name="Chen K."/>
            <person name="Wang L.J."/>
            <person name="Lan N.C."/>
            <person name="Shih J.C."/>
        </authorList>
    </citation>
    <scope>NUCLEOTIDE SEQUENCE [GENOMIC DNA]</scope>
</reference>
<reference key="2">
    <citation type="journal article" date="1988" name="Proc. Natl. Acad. Sci. U.S.A.">
        <title>cDNA cloning of human liver monoamine oxidase A and B: molecular basis of differences in enzymatic properties.</title>
        <authorList>
            <person name="Bach A.W.J."/>
            <person name="Lan N.C."/>
            <person name="Johnson D.L."/>
            <person name="Abell C.W."/>
            <person name="Bembenek M.E."/>
            <person name="Kwan S.W."/>
            <person name="Seeburg P.H."/>
            <person name="Shih J.C."/>
        </authorList>
    </citation>
    <scope>NUCLEOTIDE SEQUENCE [MRNA] (ISOFORM 1)</scope>
</reference>
<reference key="3">
    <citation type="journal article" date="1993" name="J. Neurochem.">
        <title>The deduced amino acid sequences of human platelet and frontal cortex monoamine oxidase B are identical.</title>
        <authorList>
            <person name="Chen K."/>
            <person name="Wu H.F."/>
            <person name="Shih J.C."/>
        </authorList>
    </citation>
    <scope>NUCLEOTIDE SEQUENCE [MRNA] (ISOFORM 1)</scope>
</reference>
<reference key="4">
    <citation type="journal article" date="2004" name="Nat. Genet.">
        <title>Complete sequencing and characterization of 21,243 full-length human cDNAs.</title>
        <authorList>
            <person name="Ota T."/>
            <person name="Suzuki Y."/>
            <person name="Nishikawa T."/>
            <person name="Otsuki T."/>
            <person name="Sugiyama T."/>
            <person name="Irie R."/>
            <person name="Wakamatsu A."/>
            <person name="Hayashi K."/>
            <person name="Sato H."/>
            <person name="Nagai K."/>
            <person name="Kimura K."/>
            <person name="Makita H."/>
            <person name="Sekine M."/>
            <person name="Obayashi M."/>
            <person name="Nishi T."/>
            <person name="Shibahara T."/>
            <person name="Tanaka T."/>
            <person name="Ishii S."/>
            <person name="Yamamoto J."/>
            <person name="Saito K."/>
            <person name="Kawai Y."/>
            <person name="Isono Y."/>
            <person name="Nakamura Y."/>
            <person name="Nagahari K."/>
            <person name="Murakami K."/>
            <person name="Yasuda T."/>
            <person name="Iwayanagi T."/>
            <person name="Wagatsuma M."/>
            <person name="Shiratori A."/>
            <person name="Sudo H."/>
            <person name="Hosoiri T."/>
            <person name="Kaku Y."/>
            <person name="Kodaira H."/>
            <person name="Kondo H."/>
            <person name="Sugawara M."/>
            <person name="Takahashi M."/>
            <person name="Kanda K."/>
            <person name="Yokoi T."/>
            <person name="Furuya T."/>
            <person name="Kikkawa E."/>
            <person name="Omura Y."/>
            <person name="Abe K."/>
            <person name="Kamihara K."/>
            <person name="Katsuta N."/>
            <person name="Sato K."/>
            <person name="Tanikawa M."/>
            <person name="Yamazaki M."/>
            <person name="Ninomiya K."/>
            <person name="Ishibashi T."/>
            <person name="Yamashita H."/>
            <person name="Murakawa K."/>
            <person name="Fujimori K."/>
            <person name="Tanai H."/>
            <person name="Kimata M."/>
            <person name="Watanabe M."/>
            <person name="Hiraoka S."/>
            <person name="Chiba Y."/>
            <person name="Ishida S."/>
            <person name="Ono Y."/>
            <person name="Takiguchi S."/>
            <person name="Watanabe S."/>
            <person name="Yosida M."/>
            <person name="Hotuta T."/>
            <person name="Kusano J."/>
            <person name="Kanehori K."/>
            <person name="Takahashi-Fujii A."/>
            <person name="Hara H."/>
            <person name="Tanase T.-O."/>
            <person name="Nomura Y."/>
            <person name="Togiya S."/>
            <person name="Komai F."/>
            <person name="Hara R."/>
            <person name="Takeuchi K."/>
            <person name="Arita M."/>
            <person name="Imose N."/>
            <person name="Musashino K."/>
            <person name="Yuuki H."/>
            <person name="Oshima A."/>
            <person name="Sasaki N."/>
            <person name="Aotsuka S."/>
            <person name="Yoshikawa Y."/>
            <person name="Matsunawa H."/>
            <person name="Ichihara T."/>
            <person name="Shiohata N."/>
            <person name="Sano S."/>
            <person name="Moriya S."/>
            <person name="Momiyama H."/>
            <person name="Satoh N."/>
            <person name="Takami S."/>
            <person name="Terashima Y."/>
            <person name="Suzuki O."/>
            <person name="Nakagawa S."/>
            <person name="Senoh A."/>
            <person name="Mizoguchi H."/>
            <person name="Goto Y."/>
            <person name="Shimizu F."/>
            <person name="Wakebe H."/>
            <person name="Hishigaki H."/>
            <person name="Watanabe T."/>
            <person name="Sugiyama A."/>
            <person name="Takemoto M."/>
            <person name="Kawakami B."/>
            <person name="Yamazaki M."/>
            <person name="Watanabe K."/>
            <person name="Kumagai A."/>
            <person name="Itakura S."/>
            <person name="Fukuzumi Y."/>
            <person name="Fujimori Y."/>
            <person name="Komiyama M."/>
            <person name="Tashiro H."/>
            <person name="Tanigami A."/>
            <person name="Fujiwara T."/>
            <person name="Ono T."/>
            <person name="Yamada K."/>
            <person name="Fujii Y."/>
            <person name="Ozaki K."/>
            <person name="Hirao M."/>
            <person name="Ohmori Y."/>
            <person name="Kawabata A."/>
            <person name="Hikiji T."/>
            <person name="Kobatake N."/>
            <person name="Inagaki H."/>
            <person name="Ikema Y."/>
            <person name="Okamoto S."/>
            <person name="Okitani R."/>
            <person name="Kawakami T."/>
            <person name="Noguchi S."/>
            <person name="Itoh T."/>
            <person name="Shigeta K."/>
            <person name="Senba T."/>
            <person name="Matsumura K."/>
            <person name="Nakajima Y."/>
            <person name="Mizuno T."/>
            <person name="Morinaga M."/>
            <person name="Sasaki M."/>
            <person name="Togashi T."/>
            <person name="Oyama M."/>
            <person name="Hata H."/>
            <person name="Watanabe M."/>
            <person name="Komatsu T."/>
            <person name="Mizushima-Sugano J."/>
            <person name="Satoh T."/>
            <person name="Shirai Y."/>
            <person name="Takahashi Y."/>
            <person name="Nakagawa K."/>
            <person name="Okumura K."/>
            <person name="Nagase T."/>
            <person name="Nomura N."/>
            <person name="Kikuchi H."/>
            <person name="Masuho Y."/>
            <person name="Yamashita R."/>
            <person name="Nakai K."/>
            <person name="Yada T."/>
            <person name="Nakamura Y."/>
            <person name="Ohara O."/>
            <person name="Isogai T."/>
            <person name="Sugano S."/>
        </authorList>
    </citation>
    <scope>NUCLEOTIDE SEQUENCE [LARGE SCALE MRNA] (ISOFORMS 1 AND 2)</scope>
</reference>
<reference key="5">
    <citation type="journal article" date="2005" name="Nature">
        <title>The DNA sequence of the human X chromosome.</title>
        <authorList>
            <person name="Ross M.T."/>
            <person name="Grafham D.V."/>
            <person name="Coffey A.J."/>
            <person name="Scherer S."/>
            <person name="McLay K."/>
            <person name="Muzny D."/>
            <person name="Platzer M."/>
            <person name="Howell G.R."/>
            <person name="Burrows C."/>
            <person name="Bird C.P."/>
            <person name="Frankish A."/>
            <person name="Lovell F.L."/>
            <person name="Howe K.L."/>
            <person name="Ashurst J.L."/>
            <person name="Fulton R.S."/>
            <person name="Sudbrak R."/>
            <person name="Wen G."/>
            <person name="Jones M.C."/>
            <person name="Hurles M.E."/>
            <person name="Andrews T.D."/>
            <person name="Scott C.E."/>
            <person name="Searle S."/>
            <person name="Ramser J."/>
            <person name="Whittaker A."/>
            <person name="Deadman R."/>
            <person name="Carter N.P."/>
            <person name="Hunt S.E."/>
            <person name="Chen R."/>
            <person name="Cree A."/>
            <person name="Gunaratne P."/>
            <person name="Havlak P."/>
            <person name="Hodgson A."/>
            <person name="Metzker M.L."/>
            <person name="Richards S."/>
            <person name="Scott G."/>
            <person name="Steffen D."/>
            <person name="Sodergren E."/>
            <person name="Wheeler D.A."/>
            <person name="Worley K.C."/>
            <person name="Ainscough R."/>
            <person name="Ambrose K.D."/>
            <person name="Ansari-Lari M.A."/>
            <person name="Aradhya S."/>
            <person name="Ashwell R.I."/>
            <person name="Babbage A.K."/>
            <person name="Bagguley C.L."/>
            <person name="Ballabio A."/>
            <person name="Banerjee R."/>
            <person name="Barker G.E."/>
            <person name="Barlow K.F."/>
            <person name="Barrett I.P."/>
            <person name="Bates K.N."/>
            <person name="Beare D.M."/>
            <person name="Beasley H."/>
            <person name="Beasley O."/>
            <person name="Beck A."/>
            <person name="Bethel G."/>
            <person name="Blechschmidt K."/>
            <person name="Brady N."/>
            <person name="Bray-Allen S."/>
            <person name="Bridgeman A.M."/>
            <person name="Brown A.J."/>
            <person name="Brown M.J."/>
            <person name="Bonnin D."/>
            <person name="Bruford E.A."/>
            <person name="Buhay C."/>
            <person name="Burch P."/>
            <person name="Burford D."/>
            <person name="Burgess J."/>
            <person name="Burrill W."/>
            <person name="Burton J."/>
            <person name="Bye J.M."/>
            <person name="Carder C."/>
            <person name="Carrel L."/>
            <person name="Chako J."/>
            <person name="Chapman J.C."/>
            <person name="Chavez D."/>
            <person name="Chen E."/>
            <person name="Chen G."/>
            <person name="Chen Y."/>
            <person name="Chen Z."/>
            <person name="Chinault C."/>
            <person name="Ciccodicola A."/>
            <person name="Clark S.Y."/>
            <person name="Clarke G."/>
            <person name="Clee C.M."/>
            <person name="Clegg S."/>
            <person name="Clerc-Blankenburg K."/>
            <person name="Clifford K."/>
            <person name="Cobley V."/>
            <person name="Cole C.G."/>
            <person name="Conquer J.S."/>
            <person name="Corby N."/>
            <person name="Connor R.E."/>
            <person name="David R."/>
            <person name="Davies J."/>
            <person name="Davis C."/>
            <person name="Davis J."/>
            <person name="Delgado O."/>
            <person name="Deshazo D."/>
            <person name="Dhami P."/>
            <person name="Ding Y."/>
            <person name="Dinh H."/>
            <person name="Dodsworth S."/>
            <person name="Draper H."/>
            <person name="Dugan-Rocha S."/>
            <person name="Dunham A."/>
            <person name="Dunn M."/>
            <person name="Durbin K.J."/>
            <person name="Dutta I."/>
            <person name="Eades T."/>
            <person name="Ellwood M."/>
            <person name="Emery-Cohen A."/>
            <person name="Errington H."/>
            <person name="Evans K.L."/>
            <person name="Faulkner L."/>
            <person name="Francis F."/>
            <person name="Frankland J."/>
            <person name="Fraser A.E."/>
            <person name="Galgoczy P."/>
            <person name="Gilbert J."/>
            <person name="Gill R."/>
            <person name="Gloeckner G."/>
            <person name="Gregory S.G."/>
            <person name="Gribble S."/>
            <person name="Griffiths C."/>
            <person name="Grocock R."/>
            <person name="Gu Y."/>
            <person name="Gwilliam R."/>
            <person name="Hamilton C."/>
            <person name="Hart E.A."/>
            <person name="Hawes A."/>
            <person name="Heath P.D."/>
            <person name="Heitmann K."/>
            <person name="Hennig S."/>
            <person name="Hernandez J."/>
            <person name="Hinzmann B."/>
            <person name="Ho S."/>
            <person name="Hoffs M."/>
            <person name="Howden P.J."/>
            <person name="Huckle E.J."/>
            <person name="Hume J."/>
            <person name="Hunt P.J."/>
            <person name="Hunt A.R."/>
            <person name="Isherwood J."/>
            <person name="Jacob L."/>
            <person name="Johnson D."/>
            <person name="Jones S."/>
            <person name="de Jong P.J."/>
            <person name="Joseph S.S."/>
            <person name="Keenan S."/>
            <person name="Kelly S."/>
            <person name="Kershaw J.K."/>
            <person name="Khan Z."/>
            <person name="Kioschis P."/>
            <person name="Klages S."/>
            <person name="Knights A.J."/>
            <person name="Kosiura A."/>
            <person name="Kovar-Smith C."/>
            <person name="Laird G.K."/>
            <person name="Langford C."/>
            <person name="Lawlor S."/>
            <person name="Leversha M."/>
            <person name="Lewis L."/>
            <person name="Liu W."/>
            <person name="Lloyd C."/>
            <person name="Lloyd D.M."/>
            <person name="Loulseged H."/>
            <person name="Loveland J.E."/>
            <person name="Lovell J.D."/>
            <person name="Lozado R."/>
            <person name="Lu J."/>
            <person name="Lyne R."/>
            <person name="Ma J."/>
            <person name="Maheshwari M."/>
            <person name="Matthews L.H."/>
            <person name="McDowall J."/>
            <person name="McLaren S."/>
            <person name="McMurray A."/>
            <person name="Meidl P."/>
            <person name="Meitinger T."/>
            <person name="Milne S."/>
            <person name="Miner G."/>
            <person name="Mistry S.L."/>
            <person name="Morgan M."/>
            <person name="Morris S."/>
            <person name="Mueller I."/>
            <person name="Mullikin J.C."/>
            <person name="Nguyen N."/>
            <person name="Nordsiek G."/>
            <person name="Nyakatura G."/>
            <person name="O'dell C.N."/>
            <person name="Okwuonu G."/>
            <person name="Palmer S."/>
            <person name="Pandian R."/>
            <person name="Parker D."/>
            <person name="Parrish J."/>
            <person name="Pasternak S."/>
            <person name="Patel D."/>
            <person name="Pearce A.V."/>
            <person name="Pearson D.M."/>
            <person name="Pelan S.E."/>
            <person name="Perez L."/>
            <person name="Porter K.M."/>
            <person name="Ramsey Y."/>
            <person name="Reichwald K."/>
            <person name="Rhodes S."/>
            <person name="Ridler K.A."/>
            <person name="Schlessinger D."/>
            <person name="Schueler M.G."/>
            <person name="Sehra H.K."/>
            <person name="Shaw-Smith C."/>
            <person name="Shen H."/>
            <person name="Sheridan E.M."/>
            <person name="Shownkeen R."/>
            <person name="Skuce C.D."/>
            <person name="Smith M.L."/>
            <person name="Sotheran E.C."/>
            <person name="Steingruber H.E."/>
            <person name="Steward C.A."/>
            <person name="Storey R."/>
            <person name="Swann R.M."/>
            <person name="Swarbreck D."/>
            <person name="Tabor P.E."/>
            <person name="Taudien S."/>
            <person name="Taylor T."/>
            <person name="Teague B."/>
            <person name="Thomas K."/>
            <person name="Thorpe A."/>
            <person name="Timms K."/>
            <person name="Tracey A."/>
            <person name="Trevanion S."/>
            <person name="Tromans A.C."/>
            <person name="d'Urso M."/>
            <person name="Verduzco D."/>
            <person name="Villasana D."/>
            <person name="Waldron L."/>
            <person name="Wall M."/>
            <person name="Wang Q."/>
            <person name="Warren J."/>
            <person name="Warry G.L."/>
            <person name="Wei X."/>
            <person name="West A."/>
            <person name="Whitehead S.L."/>
            <person name="Whiteley M.N."/>
            <person name="Wilkinson J.E."/>
            <person name="Willey D.L."/>
            <person name="Williams G."/>
            <person name="Williams L."/>
            <person name="Williamson A."/>
            <person name="Williamson H."/>
            <person name="Wilming L."/>
            <person name="Woodmansey R.L."/>
            <person name="Wray P.W."/>
            <person name="Yen J."/>
            <person name="Zhang J."/>
            <person name="Zhou J."/>
            <person name="Zoghbi H."/>
            <person name="Zorilla S."/>
            <person name="Buck D."/>
            <person name="Reinhardt R."/>
            <person name="Poustka A."/>
            <person name="Rosenthal A."/>
            <person name="Lehrach H."/>
            <person name="Meindl A."/>
            <person name="Minx P.J."/>
            <person name="Hillier L.W."/>
            <person name="Willard H.F."/>
            <person name="Wilson R.K."/>
            <person name="Waterston R.H."/>
            <person name="Rice C.M."/>
            <person name="Vaudin M."/>
            <person name="Coulson A."/>
            <person name="Nelson D.L."/>
            <person name="Weinstock G."/>
            <person name="Sulston J.E."/>
            <person name="Durbin R.M."/>
            <person name="Hubbard T."/>
            <person name="Gibbs R.A."/>
            <person name="Beck S."/>
            <person name="Rogers J."/>
            <person name="Bentley D.R."/>
        </authorList>
    </citation>
    <scope>NUCLEOTIDE SEQUENCE [LARGE SCALE GENOMIC DNA]</scope>
</reference>
<reference key="6">
    <citation type="submission" date="2005-09" db="EMBL/GenBank/DDBJ databases">
        <authorList>
            <person name="Mural R.J."/>
            <person name="Istrail S."/>
            <person name="Sutton G.G."/>
            <person name="Florea L."/>
            <person name="Halpern A.L."/>
            <person name="Mobarry C.M."/>
            <person name="Lippert R."/>
            <person name="Walenz B."/>
            <person name="Shatkay H."/>
            <person name="Dew I."/>
            <person name="Miller J.R."/>
            <person name="Flanigan M.J."/>
            <person name="Edwards N.J."/>
            <person name="Bolanos R."/>
            <person name="Fasulo D."/>
            <person name="Halldorsson B.V."/>
            <person name="Hannenhalli S."/>
            <person name="Turner R."/>
            <person name="Yooseph S."/>
            <person name="Lu F."/>
            <person name="Nusskern D.R."/>
            <person name="Shue B.C."/>
            <person name="Zheng X.H."/>
            <person name="Zhong F."/>
            <person name="Delcher A.L."/>
            <person name="Huson D.H."/>
            <person name="Kravitz S.A."/>
            <person name="Mouchard L."/>
            <person name="Reinert K."/>
            <person name="Remington K.A."/>
            <person name="Clark A.G."/>
            <person name="Waterman M.S."/>
            <person name="Eichler E.E."/>
            <person name="Adams M.D."/>
            <person name="Hunkapiller M.W."/>
            <person name="Myers E.W."/>
            <person name="Venter J.C."/>
        </authorList>
    </citation>
    <scope>NUCLEOTIDE SEQUENCE [LARGE SCALE GENOMIC DNA]</scope>
</reference>
<reference key="7">
    <citation type="journal article" date="1992" name="J. Neurosci.">
        <title>Promoter organization and activity of human monoamine oxidase (MAO) A and B genes.</title>
        <authorList>
            <person name="Zhu Q.S."/>
            <person name="Grimsby J.S."/>
            <person name="Chen K."/>
            <person name="Shih J.C."/>
        </authorList>
    </citation>
    <scope>NUCLEOTIDE SEQUENCE [GENOMIC DNA] OF 1-15</scope>
</reference>
<reference key="8">
    <citation type="journal article" date="2000" name="Protein Expr. Purif.">
        <title>High-level expression of human liver monoamine oxidase B in Pichia pastoris.</title>
        <authorList>
            <person name="Newton-Vinson P."/>
            <person name="Hubalek F."/>
            <person name="Edmondson D.E."/>
        </authorList>
    </citation>
    <scope>PROTEIN SEQUENCE OF 2-17</scope>
    <scope>FUNCTION</scope>
    <scope>CATALYTIC ACTIVITY</scope>
    <scope>BIOPHYSICOCHEMICAL PROPERTIES</scope>
    <scope>ACETYLATION AT SER-2</scope>
    <scope>MASS SPECTROMETRY</scope>
</reference>
<reference key="9">
    <citation type="journal article" date="1996" name="Eur. J. Biochem.">
        <title>Investigation on the structure of the active site of monoamine oxidase-B by affinity labeling with the selective inhibitor lazabemide and by site-directed mutagenesis.</title>
        <authorList>
            <person name="Cesura A.M."/>
            <person name="Gottowik J."/>
            <person name="Lahm H.-W."/>
            <person name="Lang G."/>
            <person name="Imhof R."/>
            <person name="Malherbe P."/>
            <person name="Roethlisberger U."/>
            <person name="Da Prada M."/>
        </authorList>
    </citation>
    <scope>PROTEIN SEQUENCE OF 371-391</scope>
    <scope>FUNCTION</scope>
    <scope>CATALYTIC ACTIVITY</scope>
    <scope>BIOPHYSICOCHEMICAL PROPERTIES</scope>
    <scope>MUTAGENESIS OF THR-158; HIS-382; LYS-386; CYS-389 AND SER-394</scope>
</reference>
<reference key="10">
    <citation type="journal article" date="1986" name="Neurochem. Int.">
        <title>The oxidation of adrenaline and noradrenaline by the two forms of monoamine oxidase from human and rat brain.</title>
        <authorList>
            <person name="O'Carroll A.M."/>
            <person name="Bardsley M.E."/>
            <person name="Tipton K.F."/>
        </authorList>
    </citation>
    <scope>FUNCTION</scope>
    <scope>CATALYTIC ACTIVITY</scope>
    <scope>ACTIVITY REGULATION</scope>
    <scope>BIOPHYSICOCHEMICAL PROPERTIES</scope>
</reference>
<reference key="11">
    <citation type="journal article" date="1993" name="Mol. Pharmacol.">
        <title>Site-directed mutagenesis of monoamine oxidase A and B: role of cysteines.</title>
        <authorList>
            <person name="Wu H.F."/>
            <person name="Chen K."/>
            <person name="Shih J.C."/>
        </authorList>
    </citation>
    <scope>FUNCTION</scope>
    <scope>CATALYTIC ACTIVITY</scope>
    <scope>BIOPHYSICOCHEMICAL PROPERTIES</scope>
    <scope>MUTAGENESIS OF CYS-5; CYS-156; CYS-172; CYS-192; CYS-297; CYS-312; CYS-365; CYS-389 AND CYS-397</scope>
</reference>
<reference key="12">
    <citation type="journal article" date="2001" name="J. Biol. Chem.">
        <title>Substrate and inhibitor specificities for human monoamine oxidase A and B are influenced by a single amino acid.</title>
        <authorList>
            <person name="Geha R.M."/>
            <person name="Rebrin I."/>
            <person name="Chen K."/>
            <person name="Shih J.C."/>
        </authorList>
    </citation>
    <scope>FUNCTION</scope>
    <scope>CATALYTIC ACTIVITY</scope>
    <scope>BIOPHYSICOCHEMICAL PROPERTIES</scope>
    <scope>ACTIVITY REGULATION</scope>
</reference>
<reference key="13">
    <citation type="journal article" date="2014" name="J. Proteomics">
        <title>An enzyme assisted RP-RPLC approach for in-depth analysis of human liver phosphoproteome.</title>
        <authorList>
            <person name="Bian Y."/>
            <person name="Song C."/>
            <person name="Cheng K."/>
            <person name="Dong M."/>
            <person name="Wang F."/>
            <person name="Huang J."/>
            <person name="Sun D."/>
            <person name="Wang L."/>
            <person name="Ye M."/>
            <person name="Zou H."/>
        </authorList>
    </citation>
    <scope>IDENTIFICATION BY MASS SPECTROMETRY [LARGE SCALE ANALYSIS]</scope>
    <source>
        <tissue>Liver</tissue>
    </source>
</reference>
<reference evidence="18" key="14">
    <citation type="journal article" date="2002" name="Nat. Struct. Biol.">
        <title>Structure of human monoamine oxidase B, a drug target for the treatment of neurological disorders.</title>
        <authorList>
            <person name="Binda C."/>
            <person name="Newton-Vinson P."/>
            <person name="Hubalek F."/>
            <person name="Edmondson D.E."/>
            <person name="Mattevi A."/>
        </authorList>
    </citation>
    <scope>X-RAY CRYSTALLOGRAPHY (3.00 ANGSTROMS) IN COMPLEX WITH FAD</scope>
    <scope>COFACTOR</scope>
</reference>
<reference evidence="19 20 21 22" key="15">
    <citation type="journal article" date="2003" name="Proc. Natl. Acad. Sci. U.S.A.">
        <title>Insights into the mode of inhibition of human mitochondrial monoamine oxidase B from high-resolution crystal structures.</title>
        <authorList>
            <person name="Binda C."/>
            <person name="Li M."/>
            <person name="Hubalek F."/>
            <person name="Restelli N."/>
            <person name="Edmondson D.E."/>
            <person name="Mattevi A."/>
        </authorList>
    </citation>
    <scope>X-RAY CRYSTALLOGRAPHY (1.70 ANGSTROMS) IN COMPLEX WITH FAD AND INHIBITORS</scope>
    <scope>COFACTOR</scope>
</reference>
<reference evidence="23 24 25 26" key="16">
    <citation type="journal article" date="2004" name="J. Med. Chem.">
        <title>Crystal structures of monoamine oxidase B in complex with four inhibitors of the N-propargylaminoindan class.</title>
        <authorList>
            <person name="Binda C."/>
            <person name="Hubalek F."/>
            <person name="Li M."/>
            <person name="Herzig Y."/>
            <person name="Sterling J."/>
            <person name="Edmondson D.E."/>
            <person name="Mattevi A."/>
        </authorList>
    </citation>
    <scope>X-RAY CRYSTALLOGRAPHY (1.6 ANGSTROMS) IN COMPLEXES WITH FAD AND INHIBITORS</scope>
    <scope>COFACTOR</scope>
</reference>
<reference evidence="27 28 29" key="17">
    <citation type="journal article" date="2005" name="J. Biol. Chem.">
        <title>Demonstration of isoleucine 199 as a structural determinant for the selective inhibition of human monoamine oxidase B by specific reversible inhibitors.</title>
        <authorList>
            <person name="Hubalek F."/>
            <person name="Binda C."/>
            <person name="Khalil A."/>
            <person name="Li M."/>
            <person name="Mattevi A."/>
            <person name="Castagnoli N."/>
            <person name="Edmondson D.E."/>
        </authorList>
    </citation>
    <scope>X-RAY CRYSTALLOGRAPHY (1.8 ANGSTROMS) OF MUTANT PHE-199 IN COMPLEXES WITH FAD AND INHIBITORS</scope>
    <scope>COFACTOR</scope>
</reference>
<reference evidence="31 32 33 34" key="18">
    <citation type="journal article" date="2005" name="J. Med. Chem.">
        <title>Binding of rasagiline-related inhibitors to human monoamine oxidases: a kinetic and crystallographic analysis.</title>
        <authorList>
            <person name="Binda C."/>
            <person name="Hubalek F."/>
            <person name="Li M."/>
            <person name="Herzig Y."/>
            <person name="Sterling J."/>
            <person name="Edmondson D.E."/>
            <person name="Mattevi A."/>
        </authorList>
    </citation>
    <scope>X-RAY CRYSTALLOGRAPHY (1.7 ANGSTROMS) IN COMPLEXES WITH FAD AND INHIBITORS</scope>
    <scope>COFACTOR</scope>
</reference>
<evidence type="ECO:0000250" key="1"/>
<evidence type="ECO:0000250" key="2">
    <source>
        <dbReference type="UniProtKB" id="P19643"/>
    </source>
</evidence>
<evidence type="ECO:0000250" key="3">
    <source>
        <dbReference type="UniProtKB" id="Q8BW75"/>
    </source>
</evidence>
<evidence type="ECO:0000269" key="4">
    <source>
    </source>
</evidence>
<evidence type="ECO:0000269" key="5">
    <source>
    </source>
</evidence>
<evidence type="ECO:0000269" key="6">
    <source>
    </source>
</evidence>
<evidence type="ECO:0000269" key="7">
    <source>
    </source>
</evidence>
<evidence type="ECO:0000269" key="8">
    <source>
    </source>
</evidence>
<evidence type="ECO:0000269" key="9">
    <source>
    </source>
</evidence>
<evidence type="ECO:0000269" key="10">
    <source>
    </source>
</evidence>
<evidence type="ECO:0000269" key="11">
    <source>
    </source>
</evidence>
<evidence type="ECO:0000269" key="12">
    <source>
    </source>
</evidence>
<evidence type="ECO:0000269" key="13">
    <source>
    </source>
</evidence>
<evidence type="ECO:0000303" key="14">
    <source>
    </source>
</evidence>
<evidence type="ECO:0000305" key="15"/>
<evidence type="ECO:0000305" key="16">
    <source>
    </source>
</evidence>
<evidence type="ECO:0000312" key="17">
    <source>
        <dbReference type="HGNC" id="HGNC:6834"/>
    </source>
</evidence>
<evidence type="ECO:0007744" key="18">
    <source>
        <dbReference type="PDB" id="1GOS"/>
    </source>
</evidence>
<evidence type="ECO:0007744" key="19">
    <source>
        <dbReference type="PDB" id="1OJ9"/>
    </source>
</evidence>
<evidence type="ECO:0007744" key="20">
    <source>
        <dbReference type="PDB" id="1OJA"/>
    </source>
</evidence>
<evidence type="ECO:0007744" key="21">
    <source>
        <dbReference type="PDB" id="1OJC"/>
    </source>
</evidence>
<evidence type="ECO:0007744" key="22">
    <source>
        <dbReference type="PDB" id="1OJD"/>
    </source>
</evidence>
<evidence type="ECO:0007744" key="23">
    <source>
        <dbReference type="PDB" id="1S2Q"/>
    </source>
</evidence>
<evidence type="ECO:0007744" key="24">
    <source>
        <dbReference type="PDB" id="1S2Y"/>
    </source>
</evidence>
<evidence type="ECO:0007744" key="25">
    <source>
        <dbReference type="PDB" id="1S3B"/>
    </source>
</evidence>
<evidence type="ECO:0007744" key="26">
    <source>
        <dbReference type="PDB" id="1S3E"/>
    </source>
</evidence>
<evidence type="ECO:0007744" key="27">
    <source>
        <dbReference type="PDB" id="2BK3"/>
    </source>
</evidence>
<evidence type="ECO:0007744" key="28">
    <source>
        <dbReference type="PDB" id="2BK4"/>
    </source>
</evidence>
<evidence type="ECO:0007744" key="29">
    <source>
        <dbReference type="PDB" id="2BK5"/>
    </source>
</evidence>
<evidence type="ECO:0007744" key="30">
    <source>
        <dbReference type="PDB" id="2BYB"/>
    </source>
</evidence>
<evidence type="ECO:0007744" key="31">
    <source>
        <dbReference type="PDB" id="2C64"/>
    </source>
</evidence>
<evidence type="ECO:0007744" key="32">
    <source>
        <dbReference type="PDB" id="2C65"/>
    </source>
</evidence>
<evidence type="ECO:0007744" key="33">
    <source>
        <dbReference type="PDB" id="2C66"/>
    </source>
</evidence>
<evidence type="ECO:0007744" key="34">
    <source>
        <dbReference type="PDB" id="2C67"/>
    </source>
</evidence>
<evidence type="ECO:0007744" key="35">
    <source>
        <dbReference type="PDB" id="2C70"/>
    </source>
</evidence>
<evidence type="ECO:0007744" key="36">
    <source>
        <dbReference type="PDB" id="2C72"/>
    </source>
</evidence>
<evidence type="ECO:0007744" key="37">
    <source>
        <dbReference type="PDB" id="2C73"/>
    </source>
</evidence>
<evidence type="ECO:0007744" key="38">
    <source>
        <dbReference type="PDB" id="2C75"/>
    </source>
</evidence>
<evidence type="ECO:0007744" key="39">
    <source>
        <dbReference type="PDB" id="2C76"/>
    </source>
</evidence>
<evidence type="ECO:0007744" key="40">
    <source>
        <dbReference type="PDB" id="2V5Z"/>
    </source>
</evidence>
<evidence type="ECO:0007744" key="41">
    <source>
        <dbReference type="PDB" id="2V60"/>
    </source>
</evidence>
<evidence type="ECO:0007744" key="42">
    <source>
        <dbReference type="PDB" id="2V61"/>
    </source>
</evidence>
<evidence type="ECO:0007744" key="43">
    <source>
        <dbReference type="PDB" id="2VRL"/>
    </source>
</evidence>
<evidence type="ECO:0007744" key="44">
    <source>
        <dbReference type="PDB" id="2VRM"/>
    </source>
</evidence>
<evidence type="ECO:0007744" key="45">
    <source>
        <dbReference type="PDB" id="2VZ2"/>
    </source>
</evidence>
<evidence type="ECO:0007744" key="46">
    <source>
        <dbReference type="PDB" id="2XFN"/>
    </source>
</evidence>
<evidence type="ECO:0007744" key="47">
    <source>
        <dbReference type="PDB" id="2XFO"/>
    </source>
</evidence>
<evidence type="ECO:0007744" key="48">
    <source>
        <dbReference type="PDB" id="2XFP"/>
    </source>
</evidence>
<evidence type="ECO:0007744" key="49">
    <source>
        <dbReference type="PDB" id="2XFQ"/>
    </source>
</evidence>
<evidence type="ECO:0007744" key="50">
    <source>
        <dbReference type="PDB" id="3PO7"/>
    </source>
</evidence>
<evidence type="ECO:0007744" key="51">
    <source>
        <dbReference type="PDB" id="3ZYX"/>
    </source>
</evidence>
<evidence type="ECO:0007744" key="52">
    <source>
        <dbReference type="PDB" id="4A79"/>
    </source>
</evidence>
<evidence type="ECO:0007744" key="53">
    <source>
        <dbReference type="PDB" id="4A7A"/>
    </source>
</evidence>
<evidence type="ECO:0007744" key="54">
    <source>
        <dbReference type="PDB" id="4CRT"/>
    </source>
</evidence>
<evidence type="ECO:0007744" key="55">
    <source>
        <dbReference type="PDB" id="5MRL"/>
    </source>
</evidence>
<evidence type="ECO:0007829" key="56">
    <source>
        <dbReference type="PDB" id="1S3E"/>
    </source>
</evidence>
<evidence type="ECO:0007829" key="57">
    <source>
        <dbReference type="PDB" id="2BYB"/>
    </source>
</evidence>
<evidence type="ECO:0007829" key="58">
    <source>
        <dbReference type="PDB" id="2XFN"/>
    </source>
</evidence>
<evidence type="ECO:0007829" key="59">
    <source>
        <dbReference type="PDB" id="6FW0"/>
    </source>
</evidence>
<organism>
    <name type="scientific">Homo sapiens</name>
    <name type="common">Human</name>
    <dbReference type="NCBI Taxonomy" id="9606"/>
    <lineage>
        <taxon>Eukaryota</taxon>
        <taxon>Metazoa</taxon>
        <taxon>Chordata</taxon>
        <taxon>Craniata</taxon>
        <taxon>Vertebrata</taxon>
        <taxon>Euteleostomi</taxon>
        <taxon>Mammalia</taxon>
        <taxon>Eutheria</taxon>
        <taxon>Euarchontoglires</taxon>
        <taxon>Primates</taxon>
        <taxon>Haplorrhini</taxon>
        <taxon>Catarrhini</taxon>
        <taxon>Hominidae</taxon>
        <taxon>Homo</taxon>
    </lineage>
</organism>
<name>AOFB_HUMAN</name>
<protein>
    <recommendedName>
        <fullName evidence="15">Amine oxidase [flavin-containing] B</fullName>
        <ecNumber evidence="5 11 12 13">1.4.3.21</ecNumber>
        <ecNumber evidence="11">1.4.3.4</ecNumber>
    </recommendedName>
    <alternativeName>
        <fullName>Monoamine oxidase type B</fullName>
        <shortName>MAO-B</shortName>
    </alternativeName>
</protein>
<accession>P27338</accession>
<accession>B2R6R3</accession>
<accession>B7Z5H3</accession>
<accession>D3DWC3</accession>
<accession>Q7Z6S2</accession>
<gene>
    <name evidence="17" type="primary">MAOB</name>
</gene>